<keyword id="KW-0002">3D-structure</keyword>
<keyword id="KW-0007">Acetylation</keyword>
<keyword id="KW-0025">Alternative splicing</keyword>
<keyword id="KW-1268">Autism spectrum disorder</keyword>
<keyword id="KW-0175">Coiled coil</keyword>
<keyword id="KW-0903">Direct protein sequencing</keyword>
<keyword id="KW-0225">Disease variant</keyword>
<keyword id="KW-0991">Intellectual disability</keyword>
<keyword id="KW-1017">Isopeptide bond</keyword>
<keyword id="KW-0488">Methylation</keyword>
<keyword id="KW-0507">mRNA processing</keyword>
<keyword id="KW-0508">mRNA splicing</keyword>
<keyword id="KW-0539">Nucleus</keyword>
<keyword id="KW-0597">Phosphoprotein</keyword>
<keyword id="KW-1267">Proteomics identification</keyword>
<keyword id="KW-1185">Reference proteome</keyword>
<keyword id="KW-0694">RNA-binding</keyword>
<keyword id="KW-0747">Spliceosome</keyword>
<keyword id="KW-0832">Ubl conjugation</keyword>
<protein>
    <recommendedName>
        <fullName>Serine/arginine repetitive matrix protein 2</fullName>
    </recommendedName>
    <alternativeName>
        <fullName>300 kDa nuclear matrix antigen</fullName>
    </alternativeName>
    <alternativeName>
        <fullName>Serine/arginine-rich splicing factor-related nuclear matrix protein of 300 kDa</fullName>
        <shortName>SR-related nuclear matrix protein of 300 kDa</shortName>
        <shortName>Ser/Arg-related nuclear matrix protein of 300 kDa</shortName>
    </alternativeName>
    <alternativeName>
        <fullName>Splicing coactivator subunit SRm300</fullName>
    </alternativeName>
    <alternativeName>
        <fullName>Tax-responsive enhancer element-binding protein 803</fullName>
        <shortName>TaxREB803</shortName>
    </alternativeName>
</protein>
<reference key="1">
    <citation type="journal article" date="2000" name="Biochim. Biophys. Acta">
        <title>Cloning and characterization of a novel RNA-binding protein SRL300 with RS domains.</title>
        <authorList>
            <person name="Sawada Y."/>
            <person name="Miura Y."/>
            <person name="Umeki K."/>
            <person name="Tamaoki T."/>
            <person name="Fujinaga K."/>
            <person name="Ohtaki S."/>
        </authorList>
    </citation>
    <scope>NUCLEOTIDE SEQUENCE [MRNA] (ISOFORM 1)</scope>
    <scope>RNA-BINDING</scope>
    <scope>TISSUE SPECIFICITY</scope>
    <scope>PHOSPHORYLATION</scope>
    <source>
        <tissue>Cervix carcinoma</tissue>
    </source>
</reference>
<reference key="2">
    <citation type="journal article" date="2000" name="RNA">
        <title>The SRm160/300 splicing coactivator subunits.</title>
        <authorList>
            <person name="Blencowe B.J."/>
            <person name="Bauren G."/>
            <person name="Eldridge A.G."/>
            <person name="Issner R."/>
            <person name="Nickerson J.A."/>
            <person name="Rosonina E."/>
            <person name="Sharp P.A."/>
        </authorList>
    </citation>
    <scope>NUCLEOTIDE SEQUENCE [MRNA] (ISOFORM 2)</scope>
    <scope>PROTEIN SEQUENCE OF 1223-1226 AND 2587-2597</scope>
</reference>
<reference key="3">
    <citation type="journal article" date="1997" name="DNA Res.">
        <title>Prediction of the coding sequences of unidentified human genes. VII. The complete sequences of 100 new cDNA clones from brain which can code for large proteins in vitro.</title>
        <authorList>
            <person name="Nagase T."/>
            <person name="Ishikawa K."/>
            <person name="Nakajima D."/>
            <person name="Ohira M."/>
            <person name="Seki N."/>
            <person name="Miyajima N."/>
            <person name="Tanaka A."/>
            <person name="Kotani H."/>
            <person name="Nomura N."/>
            <person name="Ohara O."/>
        </authorList>
    </citation>
    <scope>NUCLEOTIDE SEQUENCE [LARGE SCALE MRNA] (ISOFORM 1)</scope>
    <scope>VARIANT THR-804</scope>
    <source>
        <tissue>Brain</tissue>
    </source>
</reference>
<reference key="4">
    <citation type="journal article" date="2004" name="Nature">
        <title>The sequence and analysis of duplication-rich human chromosome 16.</title>
        <authorList>
            <person name="Martin J."/>
            <person name="Han C."/>
            <person name="Gordon L.A."/>
            <person name="Terry A."/>
            <person name="Prabhakar S."/>
            <person name="She X."/>
            <person name="Xie G."/>
            <person name="Hellsten U."/>
            <person name="Chan Y.M."/>
            <person name="Altherr M."/>
            <person name="Couronne O."/>
            <person name="Aerts A."/>
            <person name="Bajorek E."/>
            <person name="Black S."/>
            <person name="Blumer H."/>
            <person name="Branscomb E."/>
            <person name="Brown N.C."/>
            <person name="Bruno W.J."/>
            <person name="Buckingham J.M."/>
            <person name="Callen D.F."/>
            <person name="Campbell C.S."/>
            <person name="Campbell M.L."/>
            <person name="Campbell E.W."/>
            <person name="Caoile C."/>
            <person name="Challacombe J.F."/>
            <person name="Chasteen L.A."/>
            <person name="Chertkov O."/>
            <person name="Chi H.C."/>
            <person name="Christensen M."/>
            <person name="Clark L.M."/>
            <person name="Cohn J.D."/>
            <person name="Denys M."/>
            <person name="Detter J.C."/>
            <person name="Dickson M."/>
            <person name="Dimitrijevic-Bussod M."/>
            <person name="Escobar J."/>
            <person name="Fawcett J.J."/>
            <person name="Flowers D."/>
            <person name="Fotopulos D."/>
            <person name="Glavina T."/>
            <person name="Gomez M."/>
            <person name="Gonzales E."/>
            <person name="Goodstein D."/>
            <person name="Goodwin L.A."/>
            <person name="Grady D.L."/>
            <person name="Grigoriev I."/>
            <person name="Groza M."/>
            <person name="Hammon N."/>
            <person name="Hawkins T."/>
            <person name="Haydu L."/>
            <person name="Hildebrand C.E."/>
            <person name="Huang W."/>
            <person name="Israni S."/>
            <person name="Jett J."/>
            <person name="Jewett P.B."/>
            <person name="Kadner K."/>
            <person name="Kimball H."/>
            <person name="Kobayashi A."/>
            <person name="Krawczyk M.-C."/>
            <person name="Leyba T."/>
            <person name="Longmire J.L."/>
            <person name="Lopez F."/>
            <person name="Lou Y."/>
            <person name="Lowry S."/>
            <person name="Ludeman T."/>
            <person name="Manohar C.F."/>
            <person name="Mark G.A."/>
            <person name="McMurray K.L."/>
            <person name="Meincke L.J."/>
            <person name="Morgan J."/>
            <person name="Moyzis R.K."/>
            <person name="Mundt M.O."/>
            <person name="Munk A.C."/>
            <person name="Nandkeshwar R.D."/>
            <person name="Pitluck S."/>
            <person name="Pollard M."/>
            <person name="Predki P."/>
            <person name="Parson-Quintana B."/>
            <person name="Ramirez L."/>
            <person name="Rash S."/>
            <person name="Retterer J."/>
            <person name="Ricke D.O."/>
            <person name="Robinson D.L."/>
            <person name="Rodriguez A."/>
            <person name="Salamov A."/>
            <person name="Saunders E.H."/>
            <person name="Scott D."/>
            <person name="Shough T."/>
            <person name="Stallings R.L."/>
            <person name="Stalvey M."/>
            <person name="Sutherland R.D."/>
            <person name="Tapia R."/>
            <person name="Tesmer J.G."/>
            <person name="Thayer N."/>
            <person name="Thompson L.S."/>
            <person name="Tice H."/>
            <person name="Torney D.C."/>
            <person name="Tran-Gyamfi M."/>
            <person name="Tsai M."/>
            <person name="Ulanovsky L.E."/>
            <person name="Ustaszewska A."/>
            <person name="Vo N."/>
            <person name="White P.S."/>
            <person name="Williams A.L."/>
            <person name="Wills P.L."/>
            <person name="Wu J.-R."/>
            <person name="Wu K."/>
            <person name="Yang J."/>
            <person name="DeJong P."/>
            <person name="Bruce D."/>
            <person name="Doggett N.A."/>
            <person name="Deaven L."/>
            <person name="Schmutz J."/>
            <person name="Grimwood J."/>
            <person name="Richardson P."/>
            <person name="Rokhsar D.S."/>
            <person name="Eichler E.E."/>
            <person name="Gilna P."/>
            <person name="Lucas S.M."/>
            <person name="Myers R.M."/>
            <person name="Rubin E.M."/>
            <person name="Pennacchio L.A."/>
        </authorList>
    </citation>
    <scope>NUCLEOTIDE SEQUENCE [LARGE SCALE GENOMIC DNA]</scope>
</reference>
<reference key="5">
    <citation type="submission" date="2005-09" db="EMBL/GenBank/DDBJ databases">
        <authorList>
            <person name="Mural R.J."/>
            <person name="Istrail S."/>
            <person name="Sutton G.G."/>
            <person name="Florea L."/>
            <person name="Halpern A.L."/>
            <person name="Mobarry C.M."/>
            <person name="Lippert R."/>
            <person name="Walenz B."/>
            <person name="Shatkay H."/>
            <person name="Dew I."/>
            <person name="Miller J.R."/>
            <person name="Flanigan M.J."/>
            <person name="Edwards N.J."/>
            <person name="Bolanos R."/>
            <person name="Fasulo D."/>
            <person name="Halldorsson B.V."/>
            <person name="Hannenhalli S."/>
            <person name="Turner R."/>
            <person name="Yooseph S."/>
            <person name="Lu F."/>
            <person name="Nusskern D.R."/>
            <person name="Shue B.C."/>
            <person name="Zheng X.H."/>
            <person name="Zhong F."/>
            <person name="Delcher A.L."/>
            <person name="Huson D.H."/>
            <person name="Kravitz S.A."/>
            <person name="Mouchard L."/>
            <person name="Reinert K."/>
            <person name="Remington K.A."/>
            <person name="Clark A.G."/>
            <person name="Waterman M.S."/>
            <person name="Eichler E.E."/>
            <person name="Adams M.D."/>
            <person name="Hunkapiller M.W."/>
            <person name="Myers E.W."/>
            <person name="Venter J.C."/>
        </authorList>
    </citation>
    <scope>NUCLEOTIDE SEQUENCE [LARGE SCALE GENOMIC DNA]</scope>
</reference>
<reference key="6">
    <citation type="journal article" date="2004" name="Genome Res.">
        <title>The status, quality, and expansion of the NIH full-length cDNA project: the Mammalian Gene Collection (MGC).</title>
        <authorList>
            <consortium name="The MGC Project Team"/>
        </authorList>
    </citation>
    <scope>NUCLEOTIDE SEQUENCE [LARGE SCALE MRNA] (ISOFORM 3)</scope>
    <scope>NUCLEOTIDE SEQUENCE [LARGE SCALE MRNA] OF 1-1018 (ISOFORMS 1/2)</scope>
    <scope>NUCLEOTIDE SEQUENCE [LARGE SCALE MRNA] OF 2555-2752 (ISOFORMS 1/2)</scope>
    <source>
        <tissue>Embryonic testis</tissue>
        <tissue>Muscle</tissue>
        <tissue>Placenta</tissue>
        <tissue>Retina</tissue>
    </source>
</reference>
<reference key="7">
    <citation type="submission" date="2007-07" db="UniProtKB">
        <authorList>
            <person name="Bienvenut W.V."/>
            <person name="Heiserich L."/>
            <person name="Boulahbel H."/>
            <person name="Gottlieb E."/>
        </authorList>
    </citation>
    <scope>PROTEIN SEQUENCE OF 1-11; 44-51; 116-130; 137-155; 357-401; 1001-1013; 1041-1058; 1101-1111; 1119-1128; 1138-1158; 1224-1277; 1316-1352; 1394-1412; 1539-1556; 2104-2113; 2120-2129; 2132-2163; 2181-2221; 2232-2392; 2431-2460 AND 2690-2698</scope>
    <scope>ACETYLATION AT MET-1</scope>
    <scope>IDENTIFICATION BY MASS SPECTROMETRY</scope>
    <source>
        <tissue>Colon carcinoma</tissue>
    </source>
</reference>
<reference key="8">
    <citation type="submission" date="1999-05" db="EMBL/GenBank/DDBJ databases">
        <title>Human partial CDS from CD34+ stem cells.</title>
        <authorList>
            <person name="Ye M."/>
            <person name="Zhang Q.-H."/>
            <person name="Zhou J."/>
            <person name="Shen Y."/>
            <person name="Wu X.-Y."/>
            <person name="Guan Z.Q."/>
            <person name="Wang L."/>
            <person name="Fan H.-Y."/>
            <person name="Mao Y.-F."/>
            <person name="Dai M."/>
            <person name="Huang Q.-H."/>
            <person name="Chen S.-J."/>
            <person name="Chen Z."/>
        </authorList>
    </citation>
    <scope>NUCLEOTIDE SEQUENCE [LARGE SCALE MRNA] OF 88-185</scope>
    <source>
        <tissue>Umbilical cord blood</tissue>
    </source>
</reference>
<reference key="9">
    <citation type="journal article" date="1998" name="Genes Dev.">
        <title>A coactivator of pre-mRNA splicing.</title>
        <authorList>
            <person name="Blencowe B.J."/>
            <person name="Issner R."/>
            <person name="Nickerson J.A."/>
            <person name="Sharp P.A."/>
        </authorList>
    </citation>
    <scope>FUNCTION</scope>
    <scope>IDENTIFICATION IN A PRE-MRNA SPLICING COMPLEX WITH SFRS4; SFRS5; SNRP70; SNRPA1 AND SRRM1</scope>
    <scope>SUBCELLULAR LOCATION</scope>
</reference>
<reference key="10">
    <citation type="journal article" date="2002" name="RNA">
        <title>Purification and characterization of native spliceosomes suitable for three-dimensional structural analysis.</title>
        <authorList>
            <person name="Jurica M.S."/>
            <person name="Licklider L.J."/>
            <person name="Gygi S.P."/>
            <person name="Grigorieff N."/>
            <person name="Moore M.J."/>
        </authorList>
    </citation>
    <scope>IDENTIFICATION BY MASS SPECTROMETRY</scope>
    <scope>IDENTIFICATION IN THE SPLICEOSOMAL C COMPLEX</scope>
</reference>
<reference key="11">
    <citation type="journal article" date="2004" name="Anal. Chem.">
        <title>Robust phosphoproteomic profiling of tyrosine phosphorylation sites from human T cells using immobilized metal affinity chromatography and tandem mass spectrometry.</title>
        <authorList>
            <person name="Brill L.M."/>
            <person name="Salomon A.R."/>
            <person name="Ficarro S.B."/>
            <person name="Mukherji M."/>
            <person name="Stettler-Gill M."/>
            <person name="Peters E.C."/>
        </authorList>
    </citation>
    <scope>IDENTIFICATION BY MASS SPECTROMETRY [LARGE SCALE ANALYSIS]</scope>
    <source>
        <tissue>Leukemic T-cell</tissue>
    </source>
</reference>
<reference key="12">
    <citation type="journal article" date="2006" name="Cell">
        <title>Global, in vivo, and site-specific phosphorylation dynamics in signaling networks.</title>
        <authorList>
            <person name="Olsen J.V."/>
            <person name="Blagoev B."/>
            <person name="Gnad F."/>
            <person name="Macek B."/>
            <person name="Kumar C."/>
            <person name="Mortensen P."/>
            <person name="Mann M."/>
        </authorList>
    </citation>
    <scope>PHOSPHORYLATION [LARGE SCALE ANALYSIS] AT SER-440; THR-1003; SER-1132; SER-1188; SER-1329 AND THR-1492</scope>
    <scope>IDENTIFICATION BY MASS SPECTROMETRY [LARGE SCALE ANALYSIS]</scope>
    <source>
        <tissue>Cervix carcinoma</tissue>
    </source>
</reference>
<reference key="13">
    <citation type="journal article" date="2006" name="Nat. Biotechnol.">
        <title>A probability-based approach for high-throughput protein phosphorylation analysis and site localization.</title>
        <authorList>
            <person name="Beausoleil S.A."/>
            <person name="Villen J."/>
            <person name="Gerber S.A."/>
            <person name="Rush J."/>
            <person name="Gygi S.P."/>
        </authorList>
    </citation>
    <scope>PHOSPHORYLATION [LARGE SCALE ANALYSIS] AT THR-367; SER-377; SER-871; SER-876; SER-954; SER-1072; SER-1073; SER-1102; SER-2272; THR-2291; THR-2316; SER-2382 AND SER-2694</scope>
    <scope>IDENTIFICATION BY MASS SPECTROMETRY [LARGE SCALE ANALYSIS]</scope>
    <source>
        <tissue>Cervix carcinoma</tissue>
    </source>
</reference>
<reference key="14">
    <citation type="journal article" date="2007" name="J. Proteome Res.">
        <title>Improved titanium dioxide enrichment of phosphopeptides from HeLa cells and high confident phosphopeptide identification by cross-validation of MS/MS and MS/MS/MS spectra.</title>
        <authorList>
            <person name="Yu L.R."/>
            <person name="Zhu Z."/>
            <person name="Chan K.C."/>
            <person name="Issaq H.J."/>
            <person name="Dimitrov D.S."/>
            <person name="Veenstra T.D."/>
        </authorList>
    </citation>
    <scope>PHOSPHORYLATION [LARGE SCALE ANALYSIS] AT THR-1531</scope>
    <scope>IDENTIFICATION BY MASS SPECTROMETRY [LARGE SCALE ANALYSIS]</scope>
    <source>
        <tissue>Cervix carcinoma</tissue>
    </source>
</reference>
<reference key="15">
    <citation type="journal article" date="2007" name="Science">
        <title>ATM and ATR substrate analysis reveals extensive protein networks responsive to DNA damage.</title>
        <authorList>
            <person name="Matsuoka S."/>
            <person name="Ballif B.A."/>
            <person name="Smogorzewska A."/>
            <person name="McDonald E.R. III"/>
            <person name="Hurov K.E."/>
            <person name="Luo J."/>
            <person name="Bakalarski C.E."/>
            <person name="Zhao Z."/>
            <person name="Solimini N."/>
            <person name="Lerenthal Y."/>
            <person name="Shiloh Y."/>
            <person name="Gygi S.P."/>
            <person name="Elledge S.J."/>
        </authorList>
    </citation>
    <scope>PHOSPHORYLATION [LARGE SCALE ANALYSIS] AT SER-377 AND SER-2449</scope>
    <scope>IDENTIFICATION BY MASS SPECTROMETRY [LARGE SCALE ANALYSIS]</scope>
    <source>
        <tissue>Embryonic kidney</tissue>
    </source>
</reference>
<reference key="16">
    <citation type="journal article" date="2008" name="J. Proteome Res.">
        <title>Combining protein-based IMAC, peptide-based IMAC, and MudPIT for efficient phosphoproteomic analysis.</title>
        <authorList>
            <person name="Cantin G.T."/>
            <person name="Yi W."/>
            <person name="Lu B."/>
            <person name="Park S.K."/>
            <person name="Xu T."/>
            <person name="Lee J.-D."/>
            <person name="Yates J.R. III"/>
        </authorList>
    </citation>
    <scope>PHOSPHORYLATION [LARGE SCALE ANALYSIS] AT SER-2272</scope>
    <scope>IDENTIFICATION BY MASS SPECTROMETRY [LARGE SCALE ANALYSIS]</scope>
    <source>
        <tissue>Cervix carcinoma</tissue>
    </source>
</reference>
<reference key="17">
    <citation type="journal article" date="2008" name="Proc. Natl. Acad. Sci. U.S.A.">
        <title>A quantitative atlas of mitotic phosphorylation.</title>
        <authorList>
            <person name="Dephoure N."/>
            <person name="Zhou C."/>
            <person name="Villen J."/>
            <person name="Beausoleil S.A."/>
            <person name="Bakalarski C.E."/>
            <person name="Elledge S.J."/>
            <person name="Gygi S.P."/>
        </authorList>
    </citation>
    <scope>PHOSPHORYLATION [LARGE SCALE ANALYSIS] AT SER-295; SER-297; SER-322; SER-323; SER-351; SER-353; SER-377; SER-387; SER-398; SER-435; SER-440; SER-778; SER-780; SER-783; SER-857; SER-864; THR-866; SER-950; SER-952; SER-954; SER-957; SER-968; SER-970; SER-972; SER-974; THR-983; SER-994; THR-1003; SER-1014; SER-1028; SER-1032; SER-1064; SER-1069; SER-1072; SER-1073; SER-1099; SER-1101; SER-1102; SER-1103; SER-1112; SER-1179; SER-1188; THR-1208; SER-1318; SER-1320; SER-1326; SER-1329; SER-1387; SER-1401; SER-1404; THR-1413; SER-1415; SER-1444; SER-1451; THR-1453; THR-1472; THR-1511; SER-1522; THR-1531; SER-1537; SER-1539; SER-1541; SER-1542; SER-1552; SER-1691; SER-1693; SER-1694; THR-1698; SER-1876; SER-1878; THR-1880; SER-1923; SER-1925; THR-1927; SER-1946; SER-1948; THR-1950; SER-1958; SER-1960; THR-1962; SER-1970; SER-2100; SER-2102; THR-2104; SER-2118; SER-2121; SER-2123; SER-2132; THR-2144; SER-2272; THR-2289; THR-2302; THR-2316; THR-2329; SER-2382; SER-2398; SER-2407; THR-2409; SER-2412; SER-2449; SER-2581; SER-2675; SER-2677; SER-2690; SER-2692 AND SER-2694</scope>
    <scope>IDENTIFICATION BY MASS SPECTROMETRY [LARGE SCALE ANALYSIS]</scope>
    <source>
        <tissue>Cervix carcinoma</tissue>
    </source>
</reference>
<reference key="18">
    <citation type="journal article" date="2009" name="Anal. Chem.">
        <title>Lys-N and trypsin cover complementary parts of the phosphoproteome in a refined SCX-based approach.</title>
        <authorList>
            <person name="Gauci S."/>
            <person name="Helbig A.O."/>
            <person name="Slijper M."/>
            <person name="Krijgsveld J."/>
            <person name="Heck A.J."/>
            <person name="Mohammed S."/>
        </authorList>
    </citation>
    <scope>IDENTIFICATION BY MASS SPECTROMETRY [LARGE SCALE ANALYSIS]</scope>
</reference>
<reference key="19">
    <citation type="journal article" date="2009" name="RNA">
        <title>Physical and genetic interactions of yeast Cwc21p, an ortholog of human SRm300/SRRM2, suggest a role at the catalytic center of the spliceosome.</title>
        <authorList>
            <person name="Grainger R.J."/>
            <person name="Barrass J.D."/>
            <person name="Jacquier A."/>
            <person name="Rain J.-C."/>
            <person name="Beggs J.D."/>
        </authorList>
    </citation>
    <scope>COMPLEMENTATION OF YEAST MUTANTS</scope>
    <scope>FUNCTION</scope>
</reference>
<reference key="20">
    <citation type="journal article" date="2009" name="Sci. Signal.">
        <title>Quantitative phosphoproteomic analysis of T cell receptor signaling reveals system-wide modulation of protein-protein interactions.</title>
        <authorList>
            <person name="Mayya V."/>
            <person name="Lundgren D.H."/>
            <person name="Hwang S.-I."/>
            <person name="Rezaul K."/>
            <person name="Wu L."/>
            <person name="Eng J.K."/>
            <person name="Rodionov V."/>
            <person name="Han D.K."/>
        </authorList>
    </citation>
    <scope>PHOSPHORYLATION [LARGE SCALE ANALYSIS] AT TYR-145; SER-322; SER-323; SER-351; SER-353; SER-357; SER-358; THR-359; THR-367; SER-377; SER-846; SER-857; THR-866; SER-876; SER-952; SER-954; THR-1003; SER-1099; SER-1101; SER-1102; SER-1103; THR-1106; SER-1214; SER-1318; SER-1320; SER-1326; SER-1329; SER-1382; SER-1387; SER-1401; SER-1403; SER-1404; SER-2100; SER-2102; THR-2104; SER-2132; SER-2272; THR-2289; THR-2316; THR-2381; SER-2382 AND SER-2449</scope>
    <scope>IDENTIFICATION BY MASS SPECTROMETRY [LARGE SCALE ANALYSIS]</scope>
    <source>
        <tissue>Leukemic T-cell</tissue>
    </source>
</reference>
<reference key="21">
    <citation type="journal article" date="2009" name="Science">
        <title>Lysine acetylation targets protein complexes and co-regulates major cellular functions.</title>
        <authorList>
            <person name="Choudhary C."/>
            <person name="Kumar C."/>
            <person name="Gnad F."/>
            <person name="Nielsen M.L."/>
            <person name="Rehman M."/>
            <person name="Walther T.C."/>
            <person name="Olsen J.V."/>
            <person name="Mann M."/>
        </authorList>
    </citation>
    <scope>ACETYLATION [LARGE SCALE ANALYSIS] AT LYS-169</scope>
    <scope>IDENTIFICATION BY MASS SPECTROMETRY [LARGE SCALE ANALYSIS]</scope>
</reference>
<reference key="22">
    <citation type="journal article" date="2010" name="Sci. Signal.">
        <title>Quantitative phosphoproteomics reveals widespread full phosphorylation site occupancy during mitosis.</title>
        <authorList>
            <person name="Olsen J.V."/>
            <person name="Vermeulen M."/>
            <person name="Santamaria A."/>
            <person name="Kumar C."/>
            <person name="Miller M.L."/>
            <person name="Jensen L.J."/>
            <person name="Gnad F."/>
            <person name="Cox J."/>
            <person name="Jensen T.S."/>
            <person name="Nigg E.A."/>
            <person name="Brunak S."/>
            <person name="Mann M."/>
        </authorList>
    </citation>
    <scope>PHOSPHORYLATION [LARGE SCALE ANALYSIS] AT SER-220; SER-222; THR-286; SER-295; SER-297; SER-300; SER-351; SER-353; THR-367; SER-377; SER-424; SER-440; SER-454; SER-484; SER-486; SER-778; THR-866; SER-871; SER-875; SER-876; SER-950; SER-973; SER-974; THR-983; SER-994; THR-1003; SER-1014; SER-1028; SER-1083; SER-1099; SER-1101; SER-1103; SER-1122; SER-1124; SER-1132; SER-1152; SER-1179; SER-1188; SER-1219; SER-1320; SER-1326; SER-1329; SER-1336; SER-1368; SER-1387; SER-1404; THR-1413; SER-1415; SER-1421; THR-1434; SER-1460; SER-1462; SER-1463; SER-1482; SER-1483; THR-1492; SER-1497; SER-1499; SER-1501; SER-1502; SER-1621; SER-1762; SER-1764; SER-1854; SER-1857; SER-1890; THR-1892; SER-1893; SER-1916; SER-1919; SER-1925; THR-1927; SER-1948; THR-1950; SER-1960; THR-1962; SER-1972; SER-1975; SER-1984; SER-1987; SER-1996; SER-1999; SER-2008; SER-2011; SER-2044; SER-2046; THR-2069; SER-2071; SER-2102; THR-2104; SER-2123; SER-2132; SER-2272; THR-2289; THR-2302; THR-2329; SER-2335; SER-2343; SER-2382; SER-2394; SER-2398; SER-2407; THR-2409; SER-2426; SER-2449; SER-2453; SER-2581; THR-2583; SER-2664; SER-2684; SER-2688; SER-2690; SER-2692; SER-2694; SER-2702 AND SER-2706</scope>
    <scope>IDENTIFICATION BY MASS SPECTROMETRY [LARGE SCALE ANALYSIS]</scope>
    <source>
        <tissue>Cervix carcinoma</tissue>
    </source>
</reference>
<reference key="23">
    <citation type="journal article" date="2011" name="BMC Syst. Biol.">
        <title>Initial characterization of the human central proteome.</title>
        <authorList>
            <person name="Burkard T.R."/>
            <person name="Planyavsky M."/>
            <person name="Kaupe I."/>
            <person name="Breitwieser F.P."/>
            <person name="Buerckstuemmer T."/>
            <person name="Bennett K.L."/>
            <person name="Superti-Furga G."/>
            <person name="Colinge J."/>
        </authorList>
    </citation>
    <scope>IDENTIFICATION BY MASS SPECTROMETRY [LARGE SCALE ANALYSIS]</scope>
</reference>
<reference key="24">
    <citation type="journal article" date="2011" name="Sci. Signal.">
        <title>System-wide temporal characterization of the proteome and phosphoproteome of human embryonic stem cell differentiation.</title>
        <authorList>
            <person name="Rigbolt K.T."/>
            <person name="Prokhorova T.A."/>
            <person name="Akimov V."/>
            <person name="Henningsen J."/>
            <person name="Johansen P.T."/>
            <person name="Kratchmarova I."/>
            <person name="Kassem M."/>
            <person name="Mann M."/>
            <person name="Olsen J.V."/>
            <person name="Blagoev B."/>
        </authorList>
    </citation>
    <scope>PHOSPHORYLATION [LARGE SCALE ANALYSIS] AT SER-297; SER-351; SER-353; SER-377; SER-398; SER-404; SER-408; SER-424; SER-440; SER-778; SER-783; SER-876; SER-908; SER-973; SER-974; THR-977; THR-1003; THR-1043; SER-1069; SER-1099; SER-1101; SER-1103; SER-1124; SER-1129; SER-1132; SER-1179; SER-1188; SER-1219; SER-1320; SER-1329; SER-1382; SER-1387; SER-1404; THR-1413; SER-1415; SER-1424; SER-1444; SER-1458; SER-1463; SER-1497; SER-1499; SER-1502; SER-1517; SER-1519; SER-1521; SER-1522; SER-1542; SER-1552; SER-1577; SER-1579; SER-1581; SER-1582; SER-1598; SER-1600; SER-1601; SER-1648; SER-1658; SER-1694; SER-1727; SER-1729; SER-1731; SER-1732; SER-1762; SER-1764; SER-1818; SER-1822; SER-1854; SER-1878; SER-1884; SER-1890; SER-1916; SER-1919; SER-1925; THR-1927; THR-1931; SER-1948; THR-1950; THR-1954; SER-1960; THR-1962; THR-1966; SER-1970; SER-1972; SER-1975; THR-1978; SER-1984; SER-1987; SER-1996; SER-1999; SER-2008; SER-2011; SER-2020; THR-2022; SER-2032; THR-2034; SER-2044; SER-2046; SER-2067; THR-2069; SER-2071; SER-2090; THR-2092; THR-2104; SER-2123; SER-2132; SER-2272; SER-2382; SER-2398; SER-2407; SER-2412; SER-2415; SER-2426; SER-2429; SER-2449; SER-2581; SER-2664; SER-2684; SER-2688; SER-2692; SER-2694; SER-2702 AND SER-2706</scope>
    <scope>IDENTIFICATION BY MASS SPECTROMETRY [LARGE SCALE ANALYSIS]</scope>
</reference>
<reference key="25">
    <citation type="journal article" date="2012" name="Mol. Cell. Proteomics">
        <title>Comparative large-scale characterisation of plant vs. mammal proteins reveals similar and idiosyncratic N-alpha acetylation features.</title>
        <authorList>
            <person name="Bienvenut W.V."/>
            <person name="Sumpton D."/>
            <person name="Martinez A."/>
            <person name="Lilla S."/>
            <person name="Espagne C."/>
            <person name="Meinnel T."/>
            <person name="Giglione C."/>
        </authorList>
    </citation>
    <scope>ACETYLATION [LARGE SCALE ANALYSIS] AT MET-1</scope>
    <scope>IDENTIFICATION BY MASS SPECTROMETRY [LARGE SCALE ANALYSIS]</scope>
</reference>
<reference key="26">
    <citation type="journal article" date="2012" name="Proc. Natl. Acad. Sci. U.S.A.">
        <title>N-terminal acetylome analyses and functional insights of the N-terminal acetyltransferase NatB.</title>
        <authorList>
            <person name="Van Damme P."/>
            <person name="Lasa M."/>
            <person name="Polevoda B."/>
            <person name="Gazquez C."/>
            <person name="Elosegui-Artola A."/>
            <person name="Kim D.S."/>
            <person name="De Juan-Pardo E."/>
            <person name="Demeyer K."/>
            <person name="Hole K."/>
            <person name="Larrea E."/>
            <person name="Timmerman E."/>
            <person name="Prieto J."/>
            <person name="Arnesen T."/>
            <person name="Sherman F."/>
            <person name="Gevaert K."/>
            <person name="Aldabe R."/>
        </authorList>
    </citation>
    <scope>ACETYLATION [LARGE SCALE ANALYSIS] AT MET-1</scope>
    <scope>IDENTIFICATION BY MASS SPECTROMETRY [LARGE SCALE ANALYSIS]</scope>
</reference>
<reference key="27">
    <citation type="journal article" date="2013" name="J. Proteome Res.">
        <title>Toward a comprehensive characterization of a human cancer cell phosphoproteome.</title>
        <authorList>
            <person name="Zhou H."/>
            <person name="Di Palma S."/>
            <person name="Preisinger C."/>
            <person name="Peng M."/>
            <person name="Polat A.N."/>
            <person name="Heck A.J."/>
            <person name="Mohammed S."/>
        </authorList>
    </citation>
    <scope>PHOSPHORYLATION [LARGE SCALE ANALYSIS] AT SER-295; SER-297; SER-300; SER-322; SER-323; THR-367; SER-377; SER-387; SER-424; SER-435; SER-436; SER-437; SER-440; SER-506; SER-508; SER-510; SER-534; SER-536; SER-543; SER-702; SER-704; SER-706; SER-778; SER-780; SER-857; SER-864; THR-866; SER-876; SER-950; SER-952; SER-954; THR-983; SER-992; SER-994; THR-1003; SER-1010; SER-1014; SER-1064; SER-1069; SER-1083; SER-1103; SER-1112; SER-1122; SER-1124; SER-1132; SER-1152; SER-1179; SER-1188; SER-1198; THR-1208; SER-1227; SER-1254; SER-1257; SER-1258; SER-1318; SER-1320; SER-1326; SER-1329; SER-1382; SER-1387; SER-1401; SER-1403; SER-1404; THR-1413; THR-1434; SER-1444; SER-1458; SER-1463; THR-1492; SER-1499; THR-1531; SER-1537; SER-1539; SER-1541; SER-1542; SER-1552; SER-1648; SER-1694; SER-1854; SER-1857; SER-1876; SER-1878; THR-1880; SER-2018; SER-2020; THR-2022; SER-2030; SER-2032; THR-2034; SER-2042; SER-2044; SER-2046; SER-2067; THR-2069; SER-2071; SER-2100; SER-2102; THR-2104; SER-2121; SER-2123; SER-2132; SER-2272; THR-2289; SER-2310; THR-2316; THR-2329; SER-2335; SER-2368; SER-2376; SER-2398; SER-2407; THR-2409; SER-2412; SER-2426; SER-2449; SER-2581; THR-2599; SER-2675; SER-2677; SER-2684; SER-2688; SER-2692; SER-2694; SER-2702; THR-2738 AND SER-2740</scope>
    <scope>IDENTIFICATION BY MASS SPECTROMETRY [LARGE SCALE ANALYSIS]</scope>
    <source>
        <tissue>Cervix carcinoma</tissue>
        <tissue>Erythroleukemia</tissue>
    </source>
</reference>
<reference key="28">
    <citation type="journal article" date="2014" name="J. Proteomics">
        <title>An enzyme assisted RP-RPLC approach for in-depth analysis of human liver phosphoproteome.</title>
        <authorList>
            <person name="Bian Y."/>
            <person name="Song C."/>
            <person name="Cheng K."/>
            <person name="Dong M."/>
            <person name="Wang F."/>
            <person name="Huang J."/>
            <person name="Sun D."/>
            <person name="Wang L."/>
            <person name="Ye M."/>
            <person name="Zou H."/>
        </authorList>
    </citation>
    <scope>PHOSPHORYLATION [LARGE SCALE ANALYSIS] AT SER-295; SER-297; SER-300; SER-323; SER-351; SER-353; SER-377; THR-383; THR-384; SER-387; SER-395; SER-398; SER-404; SER-408; SER-424; SER-440; THR-866; SER-935; THR-983; SER-994; TYR-996; THR-1003; SER-1010; SER-1014; TYR-1049; SER-1083; SER-1124; SER-1132; SER-1152; SER-1179; SER-1188; SER-1219; SER-1311; SER-1320; SER-1326; SER-1329; SER-1387; SER-2272; SER-2382; SER-2581; THR-2583 AND SER-2702</scope>
    <scope>IDENTIFICATION BY MASS SPECTROMETRY [LARGE SCALE ANALYSIS]</scope>
    <source>
        <tissue>Liver</tissue>
    </source>
</reference>
<reference key="29">
    <citation type="journal article" date="2014" name="Mol. Cell. Proteomics">
        <title>Immunoaffinity enrichment and mass spectrometry analysis of protein methylation.</title>
        <authorList>
            <person name="Guo A."/>
            <person name="Gu H."/>
            <person name="Zhou J."/>
            <person name="Mulhern D."/>
            <person name="Wang Y."/>
            <person name="Lee K.A."/>
            <person name="Yang V."/>
            <person name="Aguiar M."/>
            <person name="Kornhauser J."/>
            <person name="Jia X."/>
            <person name="Ren J."/>
            <person name="Beausoleil S.A."/>
            <person name="Silva J.C."/>
            <person name="Vemulapalli V."/>
            <person name="Bedford M.T."/>
            <person name="Comb M.J."/>
        </authorList>
    </citation>
    <scope>METHYLATION [LARGE SCALE ANALYSIS] AT ARG-2194; ARG-2207; ARG-2231; ARG-2246; ARG-2274; ARG-2288; ARG-2342 AND ARG-2384</scope>
    <scope>IDENTIFICATION BY MASS SPECTROMETRY [LARGE SCALE ANALYSIS]</scope>
    <source>
        <tissue>Colon carcinoma</tissue>
    </source>
</reference>
<reference key="30">
    <citation type="journal article" date="2017" name="J. Cell Sci.">
        <title>Human cactin interacts with DHX8 and SRRM2 to assure efficient pre-mRNA splicing and sister chromatid cohesion.</title>
        <authorList>
            <person name="Zanini I.M."/>
            <person name="Soneson C."/>
            <person name="Lorenzi L.E."/>
            <person name="Azzalin C.M."/>
        </authorList>
    </citation>
    <scope>INTERACTION WITH DHX8 AND CACTIN</scope>
    <scope>SUBCELLULAR LOCATION</scope>
</reference>
<reference key="31">
    <citation type="journal article" date="2017" name="Nat. Struct. Mol. Biol.">
        <title>Site-specific mapping of the human SUMO proteome reveals co-modification with phosphorylation.</title>
        <authorList>
            <person name="Hendriks I.A."/>
            <person name="Lyon D."/>
            <person name="Young C."/>
            <person name="Jensen L.J."/>
            <person name="Vertegaal A.C."/>
            <person name="Nielsen M.L."/>
        </authorList>
    </citation>
    <scope>SUMOYLATION [LARGE SCALE ANALYSIS] AT LYS-108; LYS-130 AND LYS-2587</scope>
    <scope>IDENTIFICATION BY MASS SPECTROMETRY [LARGE SCALE ANALYSIS]</scope>
</reference>
<reference key="32">
    <citation type="journal article" date="2022" name="Genet. Med.">
        <title>Loss-of-function variants in SRRM2 cause a neurodevelopmental disorder.</title>
        <authorList>
            <person name="Cuinat S."/>
            <person name="Nizon M."/>
            <person name="Isidor B."/>
            <person name="Stegmann A."/>
            <person name="van Jaarsveld R.H."/>
            <person name="van Gassen K.L."/>
            <person name="van der Smagt J.J."/>
            <person name="Volker-Touw C.M.L."/>
            <person name="Holwerda S.J.B."/>
            <person name="Terhal P.A."/>
            <person name="Schuhmann S."/>
            <person name="Vasileiou G."/>
            <person name="Khalifa M."/>
            <person name="Nugud A.A."/>
            <person name="Yasaei H."/>
            <person name="Ousager L.B."/>
            <person name="Brasch-Andersen C."/>
            <person name="Deb W."/>
            <person name="Besnard T."/>
            <person name="Simon M.E.H."/>
            <person name="Amsterdam K.H."/>
            <person name="Verbeek N.E."/>
            <person name="Matalon D."/>
            <person name="Dykzeul N."/>
            <person name="White S."/>
            <person name="Spiteri E."/>
            <person name="Devriendt K."/>
            <person name="Boogaerts A."/>
            <person name="Willemsen M."/>
            <person name="Brunner H.G."/>
            <person name="Sinnema M."/>
            <person name="De Vries B.B.A."/>
            <person name="Gerkes E.H."/>
            <person name="Pfundt R."/>
            <person name="Izumi K."/>
            <person name="Krantz I.D."/>
            <person name="Xu Z.L."/>
            <person name="Murrell J.R."/>
            <person name="Valenzuela I."/>
            <person name="Cusco I."/>
            <person name="Rovira-Moreno E."/>
            <person name="Yang Y."/>
            <person name="Bizaoui V."/>
            <person name="Patat O."/>
            <person name="Faivre L."/>
            <person name="Tran-Mau-Them F."/>
            <person name="Vitobello A."/>
            <person name="Denomme-Pichon A.S."/>
            <person name="Philippe C."/>
            <person name="Bezieau S."/>
            <person name="Cogne B."/>
        </authorList>
    </citation>
    <scope>INVOLVEMENT IN MRD72</scope>
    <scope>VARIANTS MRD72 20-GLN--PRO-2752 DEL; 628-ARG--PRO-2752 DEL; 1116-GLN--PRO-2752 DEL; 1539-SER--PRO-2752 DEL; 1638-SER--PRO-2752 DEL; 1692-ARG--PRO-2752 DEL; 2043-ARG--PRO-2752 DEL AND 2089-ARG--PRO-2752 DEL</scope>
</reference>
<reference evidence="25" key="33">
    <citation type="journal article" date="2017" name="Cell">
        <title>An Atomic Structure of the Human Spliceosome.</title>
        <authorList>
            <person name="Zhang X."/>
            <person name="Yan C."/>
            <person name="Hang J."/>
            <person name="Finci L.I."/>
            <person name="Lei J."/>
            <person name="Shi Y."/>
        </authorList>
    </citation>
    <scope>STRUCTURE BY ELECTRON MICROSCOPY (3.60 ANGSTROMS)</scope>
    <scope>FUNCTION</scope>
    <scope>SUBCELLULAR LOCATION</scope>
    <scope>SUBUNIT</scope>
</reference>
<reference evidence="24" key="34">
    <citation type="journal article" date="2017" name="Nature">
        <title>Cryo-EM structure of a human spliceosome activated for step 2 of splicing.</title>
        <authorList>
            <person name="Bertram K."/>
            <person name="Agafonov D.E."/>
            <person name="Liu W.T."/>
            <person name="Dybkov O."/>
            <person name="Will C.L."/>
            <person name="Hartmuth K."/>
            <person name="Urlaub H."/>
            <person name="Kastner B."/>
            <person name="Stark H."/>
            <person name="Luhrmann R."/>
        </authorList>
    </citation>
    <scope>STRUCTURE BY ELECTRON MICROSCOPY (5.90 ANGSTROMS)</scope>
    <scope>IDENTIFICATION BY MASS SPECTROMETRY</scope>
    <scope>FUNCTION</scope>
    <scope>SUBCELLULAR LOCATION</scope>
    <scope>SUBUNIT</scope>
</reference>
<reference evidence="29" key="35">
    <citation type="journal article" date="2018" name="Cell">
        <title>Structure and Conformational Dynamics of the Human Spliceosomal Bact Complex.</title>
        <authorList>
            <person name="Haselbach D."/>
            <person name="Komarov I."/>
            <person name="Agafonov D.E."/>
            <person name="Hartmuth K."/>
            <person name="Graf B."/>
            <person name="Dybkov O."/>
            <person name="Urlaub H."/>
            <person name="Kastner B."/>
            <person name="Luhrmann R."/>
            <person name="Stark H."/>
        </authorList>
    </citation>
    <scope>STRUCTURE BY ELECTRON MICROSCOPY (3.40 ANGSTROMS)</scope>
    <scope>FUNCTION</scope>
    <scope>SUBCELLULAR LOCATION</scope>
    <scope>SUBUNIT</scope>
</reference>
<reference evidence="27 28" key="36">
    <citation type="journal article" date="2018" name="Cell Res.">
        <title>Structure of the human activated spliceosome in three conformational states.</title>
        <authorList>
            <person name="Zhang X."/>
            <person name="Yan C."/>
            <person name="Zhan X."/>
            <person name="Li L."/>
            <person name="Lei J."/>
            <person name="Shi Y."/>
        </authorList>
    </citation>
    <scope>STRUCTURE BY ELECTRON MICROSCOPY (5.10 ANGSTROMS)</scope>
    <scope>FUNCTION</scope>
    <scope>SUBCELLULAR LOCATION</scope>
    <scope>SUBUNIT</scope>
</reference>
<reference evidence="26" key="37">
    <citation type="journal article" date="2018" name="Science">
        <title>Structure of a human catalytic step I spliceosome.</title>
        <authorList>
            <person name="Zhan X."/>
            <person name="Yan C."/>
            <person name="Zhang X."/>
            <person name="Lei J."/>
            <person name="Shi Y."/>
        </authorList>
    </citation>
    <scope>STRUCTURE BY ELECTRON MICROSCOPY (4.10 ANGSTROMS)</scope>
    <scope>FUNCTION</scope>
    <scope>SUBCELLULAR LOCATION</scope>
    <scope>SUBUNIT</scope>
</reference>
<reference evidence="30" key="38">
    <citation type="journal article" date="2019" name="Science">
        <title>A human postcatalytic spliceosome structure reveals essential roles of metazoan factors for exon ligation.</title>
        <authorList>
            <person name="Fica S.M."/>
            <person name="Oubridge C."/>
            <person name="Wilkinson M.E."/>
            <person name="Newman A.J."/>
            <person name="Nagai K."/>
        </authorList>
    </citation>
    <scope>STRUCTURE BY ELECTRON MICROSCOPY (3.30 ANGSTROMS) OF 1-26</scope>
    <scope>FUNCTION</scope>
    <scope>SUBCELLULAR LOCATION</scope>
    <scope>SUBUNIT</scope>
</reference>
<reference evidence="31" key="39">
    <citation type="journal article" date="2021" name="Science">
        <title>Structure of the activated human minor spliceosome.</title>
        <authorList>
            <person name="Bai R."/>
            <person name="Wan R."/>
            <person name="Wang L."/>
            <person name="Xu K."/>
            <person name="Zhang Q."/>
            <person name="Lei J."/>
            <person name="Shi Y."/>
        </authorList>
    </citation>
    <scope>STRUCTURE BY ELECTRON MICROSCOPY (2.89 ANGSTROMS)</scope>
    <scope>SUBUNIT</scope>
</reference>
<accession>Q9UQ35</accession>
<accession>A6NKB9</accession>
<accession>D3DU97</accession>
<accession>O15038</accession>
<accession>O94803</accession>
<accession>Q6NSL3</accession>
<accession>Q6PIM3</accession>
<accession>Q6PK40</accession>
<accession>Q8IW17</accession>
<accession>Q96GY7</accession>
<accession>Q9P0G1</accession>
<accession>Q9UHA8</accession>
<accession>Q9UQ36</accession>
<accession>Q9UQ37</accession>
<accession>Q9UQ38</accession>
<accession>Q9UQ40</accession>
<evidence type="ECO:0000250" key="1">
    <source>
        <dbReference type="UniProtKB" id="Q8BTI8"/>
    </source>
</evidence>
<evidence type="ECO:0000255" key="2"/>
<evidence type="ECO:0000256" key="3">
    <source>
        <dbReference type="SAM" id="MobiDB-lite"/>
    </source>
</evidence>
<evidence type="ECO:0000269" key="4">
    <source>
    </source>
</evidence>
<evidence type="ECO:0000269" key="5">
    <source>
    </source>
</evidence>
<evidence type="ECO:0000269" key="6">
    <source>
    </source>
</evidence>
<evidence type="ECO:0000269" key="7">
    <source>
    </source>
</evidence>
<evidence type="ECO:0000269" key="8">
    <source>
    </source>
</evidence>
<evidence type="ECO:0000269" key="9">
    <source>
    </source>
</evidence>
<evidence type="ECO:0000269" key="10">
    <source>
    </source>
</evidence>
<evidence type="ECO:0000269" key="11">
    <source>
    </source>
</evidence>
<evidence type="ECO:0000269" key="12">
    <source>
    </source>
</evidence>
<evidence type="ECO:0000269" key="13">
    <source>
    </source>
</evidence>
<evidence type="ECO:0000269" key="14">
    <source>
    </source>
</evidence>
<evidence type="ECO:0000269" key="15">
    <source>
    </source>
</evidence>
<evidence type="ECO:0000269" key="16">
    <source>
    </source>
</evidence>
<evidence type="ECO:0000269" key="17">
    <source>
    </source>
</evidence>
<evidence type="ECO:0000269" key="18">
    <source ref="7"/>
</evidence>
<evidence type="ECO:0000303" key="19">
    <source>
    </source>
</evidence>
<evidence type="ECO:0000303" key="20">
    <source>
    </source>
</evidence>
<evidence type="ECO:0000305" key="21"/>
<evidence type="ECO:0000305" key="22">
    <source>
    </source>
</evidence>
<evidence type="ECO:0000305" key="23">
    <source>
    </source>
</evidence>
<evidence type="ECO:0007744" key="24">
    <source>
        <dbReference type="PDB" id="5MQF"/>
    </source>
</evidence>
<evidence type="ECO:0007744" key="25">
    <source>
        <dbReference type="PDB" id="5XJC"/>
    </source>
</evidence>
<evidence type="ECO:0007744" key="26">
    <source>
        <dbReference type="PDB" id="5YZG"/>
    </source>
</evidence>
<evidence type="ECO:0007744" key="27">
    <source>
        <dbReference type="PDB" id="5Z56"/>
    </source>
</evidence>
<evidence type="ECO:0007744" key="28">
    <source>
        <dbReference type="PDB" id="5Z57"/>
    </source>
</evidence>
<evidence type="ECO:0007744" key="29">
    <source>
        <dbReference type="PDB" id="6FF4"/>
    </source>
</evidence>
<evidence type="ECO:0007744" key="30">
    <source>
        <dbReference type="PDB" id="6QDV"/>
    </source>
</evidence>
<evidence type="ECO:0007744" key="31">
    <source>
        <dbReference type="PDB" id="7DVQ"/>
    </source>
</evidence>
<evidence type="ECO:0007744" key="32">
    <source>
    </source>
</evidence>
<evidence type="ECO:0007744" key="33">
    <source>
    </source>
</evidence>
<evidence type="ECO:0007744" key="34">
    <source>
    </source>
</evidence>
<evidence type="ECO:0007744" key="35">
    <source>
    </source>
</evidence>
<evidence type="ECO:0007744" key="36">
    <source>
    </source>
</evidence>
<evidence type="ECO:0007744" key="37">
    <source>
    </source>
</evidence>
<evidence type="ECO:0007744" key="38">
    <source>
    </source>
</evidence>
<evidence type="ECO:0007744" key="39">
    <source>
    </source>
</evidence>
<evidence type="ECO:0007744" key="40">
    <source>
    </source>
</evidence>
<evidence type="ECO:0007744" key="41">
    <source>
    </source>
</evidence>
<evidence type="ECO:0007744" key="42">
    <source>
    </source>
</evidence>
<evidence type="ECO:0007744" key="43">
    <source>
    </source>
</evidence>
<evidence type="ECO:0007744" key="44">
    <source>
    </source>
</evidence>
<evidence type="ECO:0007744" key="45">
    <source>
    </source>
</evidence>
<evidence type="ECO:0007744" key="46">
    <source>
    </source>
</evidence>
<evidence type="ECO:0007744" key="47">
    <source>
    </source>
</evidence>
<evidence type="ECO:0007829" key="48">
    <source>
        <dbReference type="PDB" id="6FF4"/>
    </source>
</evidence>
<evidence type="ECO:0007829" key="49">
    <source>
        <dbReference type="PDB" id="6ICZ"/>
    </source>
</evidence>
<evidence type="ECO:0007829" key="50">
    <source>
        <dbReference type="PDB" id="7DVQ"/>
    </source>
</evidence>
<evidence type="ECO:0007829" key="51">
    <source>
        <dbReference type="PDB" id="7QTT"/>
    </source>
</evidence>
<sequence length="2752" mass="299615">MYNGIGLPTPRGSGTNGYVQRNLSLVRGRRGERPDYKGEEELRRLEAALVKRPNPDILDHERKRRVELRCLELEEMMEEQGYEEQQIQEKVATFRLMLLEKDVNPGGKEETPGQRPAVTETHQLAELNEKKNERLRAAFGISDSYVDGSSFDPQRRAREAKQPAPEPPKPYSLVRESSSSRSPTPKQKKKKKKKDRGRRSESSSPRRERKKSSKKKKHRSESESKKRKHRSPTPKSKRKSKDKKRKRSRSTTPAPKSRRAHRSTSADSASSSDTSRSRSRSAAAKTHTTALAGRSPSPASGRRGEGDAPFSEPGTTSTQRPSSPETATKQPSSPYEDKDKDKKEKSATRPSPSPERSSTGPEPPAPTPLLAERHGGSPQPLATTPLSQEPVNPPSEASPTRDRSPPKSPEKLPQSSSSESSPPSPQPTKVSRHASSSPESPKPAPAPGSHREISSSPTSKNRSHGRAKRDKSHSHTPSRRMGRSRSPATAKRGRSRSRTPTKRGHSRSRSPQWRRSRSAQRWGRSRSPQRRGRSRSPQRPGWSRSRNTQRRGRSRSARRGRSHSRSPATRGRSRSRTPARRGRSRSRTPARRRSRSRTPTRRRSRSRTPARRGRSRSRTPARRRSRTRSPVRRRSRSRSPARRSGRSRSRTPARRGRSRSRTPARRGRSRSRTPARRSGRSRSRTPARRGRSRSRTPRRGRSRSRSLVRRGRSHSRTPQRRGRSGSSSERKNKSRTSQRRSRSNSSPEMKKSRISSRRSRSLSSPRSKAKSRLSLRRSLSGSSPCPKQKSQTPPRRSRSGSSQPKAKSRTPPRRSRSSSSPPPKQKSKTPSRQSHSSSSPHPKVKSGTPPRQGSITSPQANEQSVTPQRRSCFESSPDPELKSRTPSRHSCSGSSPPRVKSSTPPRQSPSRSSSPQPKVKAIISPRQRSHSGSSSPSPSRVTSRTTPRRSRSVSPCSNVESRLLPRYSHSGSSSPDTKVKPETPPRQSHSGSISPYPKVKAQTPPGPSLSGSKSPCPQEKSKDSLVQSCPGSLSLCAGVKSSTPPGESYFGVSSLQLKGQSQTSPDHRSDTSSPEVRQSHSESPSLQSKSQTSPKGGRSRSSSPVTELASRSPIRQDRGEFSASPMLKSGMSPEQSRFQSDSSSYPTVDSNSLLGQSRLETAESKEKMALPPQEDATASPPRQKDKFSPFPVQDRPESSLVFKDTLRTPPRERSGAGSSPETKEQNSALPTSSQDEELMEVVEKSEEPAGQILSHLSSELKEMSTSNFESSPEVEERPAVSLTLDQSQSQASLEAVEVPSMASSWGGPHFSPEHKELSNSPLRENSFGSPLEFRNSGPLGTEMNTGFSSEVKEDLNGPFLNQLETDPSLDMKEQSTRSSGHSSSELSPDAVEKAGMSSNQSISSPVLDAVPRTPSRERSSSASSPEMKDGLPRTPSRRSRSGSSPGLRDGSGTPSRHSLSGSSPGMKDIPRTPSRGRSECDSSPEPKALPQTPRPRSRSPSSPELNNKCLTPQRERSGSESSVDQKTVARTPLGQRSRSGSSQELDVKPSASPQERSESDSSPDSKAKTRTPLRQRSRSGSSPEVDSKSRLSPRRSRSGSSPEVKDKPRAAPRAQSGSDSSPEPKAPAPRALPRRSRSGSSSKGRGPSPEGSSSTESSPEHPPKSRTARRGSRSSPEPKTKSRTPPRRRSSRSSPELTRKARLSRRSRSASSSPETRSRTPPRHRRSPSVSSPEPAEKSRSSRRRRSASSPRTKTTSRRGRSPSPKPRGLQRSRSRSRREKTRTTRRRDRSGSSQSTSRRRQRSRSRSRVTRRRRGGSGYHSRSPARQESSRTSSRRRRGRSRTPPTSRKRSRSRTSPAPWKRSRSRASPATHRRSRSRTPLISRRRSRSRTSPVSRRRSRSRTSVTRRRSRSRASPVSRRRSRSRTPPVTRRRSRSRTPTTRRRSRSRTPPVTRRRSRSRTPPVTRRRSRSRTSPITRRRSRSRTSPVTRRRSRSRTSPVTRRRSRSRTSPVTRRRSRSRTPPAIRRRSRSRTPLLPRKRSRSRSPLAIRRRSRSRTPRTARGKRSLTRSPPAIRRRSASGSSSDRSRSATPPATRNHSGSRTPPVALNSSRMSCFSRPSMSPTPLDRCRSPGMLEPLGSSRTPMSVLQQAGGSMMDGPGPRIPDHQRTSVPENHAQSRIALALTAISLGTARPPPSMSAAGLAARMSQVPAPVPLMSLRTAPAANLASRIPAASAAAMNLASARTPAIPTAVNLADSRTPAAAAAMNLASPRTAVAPSAVNLADPRTPTAPAVNLAGARTPAALAALSLTGSGTPPTAANYPSSSRTPQAPASANLVGPRSAHATAPVNIAGSRTAAALAPASLTSARMAPALSGANLTSPRVPLSAYERVSGRTSPPLLDRARSRTPPSAPSQSRMTSERAPSPSSRMGQAPSQSLLPPAQDQPRSPVPSAFSDQSRCLIAQTTPVAGSQSLSSGAVATTTSSAGDHNGMLSVPAPGVPHSDVGEPPASTGAQQPSALAALQPAKERRSSSSSSSSSSSSSSSSSSSSSSSSSGSSSSDSEGSSLPVQPEVALKRVPSPTPAPKEAVREGRPPEPTPAKRKRRSSSSSSSSSSSSSSSSSSSSSSSSSSSSSSSSSSSSSSSSSSPSPAKPGPQALPKPASPKKPPPGERRSRSPRKPIDSLRDSRSLSYSPVERRRPSPQPSPRDQQSSSSERGSRRGQRGDSRSPSHKRRRETPSPRPMRHRSSRSP</sequence>
<gene>
    <name type="primary">SRRM2</name>
    <name type="synonym">KIAA0324</name>
    <name type="synonym">SRL300</name>
    <name type="synonym">SRM300</name>
    <name type="ORF">HSPC075</name>
</gene>
<organism>
    <name type="scientific">Homo sapiens</name>
    <name type="common">Human</name>
    <dbReference type="NCBI Taxonomy" id="9606"/>
    <lineage>
        <taxon>Eukaryota</taxon>
        <taxon>Metazoa</taxon>
        <taxon>Chordata</taxon>
        <taxon>Craniata</taxon>
        <taxon>Vertebrata</taxon>
        <taxon>Euteleostomi</taxon>
        <taxon>Mammalia</taxon>
        <taxon>Eutheria</taxon>
        <taxon>Euarchontoglires</taxon>
        <taxon>Primates</taxon>
        <taxon>Haplorrhini</taxon>
        <taxon>Catarrhini</taxon>
        <taxon>Hominidae</taxon>
        <taxon>Homo</taxon>
    </lineage>
</organism>
<feature type="chain" id="PRO_0000248154" description="Serine/arginine repetitive matrix protein 2">
    <location>
        <begin position="1"/>
        <end position="2752"/>
    </location>
</feature>
<feature type="region of interest" description="Disordered" evidence="3">
    <location>
        <begin position="141"/>
        <end position="2131"/>
    </location>
</feature>
<feature type="region of interest" description="Sufficient for RNA-binding">
    <location>
        <begin position="197"/>
        <end position="259"/>
    </location>
</feature>
<feature type="region of interest" description="Disordered" evidence="3">
    <location>
        <begin position="2311"/>
        <end position="2342"/>
    </location>
</feature>
<feature type="region of interest" description="Disordered" evidence="3">
    <location>
        <begin position="2389"/>
        <end position="2752"/>
    </location>
</feature>
<feature type="coiled-coil region" evidence="2">
    <location>
        <begin position="60"/>
        <end position="92"/>
    </location>
</feature>
<feature type="compositionally biased region" description="Low complexity" evidence="3">
    <location>
        <begin position="175"/>
        <end position="185"/>
    </location>
</feature>
<feature type="compositionally biased region" description="Basic residues" evidence="3">
    <location>
        <begin position="186"/>
        <end position="197"/>
    </location>
</feature>
<feature type="compositionally biased region" description="Basic residues" evidence="3">
    <location>
        <begin position="207"/>
        <end position="249"/>
    </location>
</feature>
<feature type="compositionally biased region" description="Low complexity" evidence="3">
    <location>
        <begin position="263"/>
        <end position="290"/>
    </location>
</feature>
<feature type="compositionally biased region" description="Polar residues" evidence="3">
    <location>
        <begin position="313"/>
        <end position="333"/>
    </location>
</feature>
<feature type="compositionally biased region" description="Basic and acidic residues" evidence="3">
    <location>
        <begin position="335"/>
        <end position="347"/>
    </location>
</feature>
<feature type="compositionally biased region" description="Low complexity" evidence="3">
    <location>
        <begin position="348"/>
        <end position="360"/>
    </location>
</feature>
<feature type="compositionally biased region" description="Polar residues" evidence="3">
    <location>
        <begin position="380"/>
        <end position="398"/>
    </location>
</feature>
<feature type="compositionally biased region" description="Basic and acidic residues" evidence="3">
    <location>
        <begin position="399"/>
        <end position="410"/>
    </location>
</feature>
<feature type="compositionally biased region" description="Low complexity" evidence="3">
    <location>
        <begin position="411"/>
        <end position="421"/>
    </location>
</feature>
<feature type="compositionally biased region" description="Basic residues" evidence="3">
    <location>
        <begin position="461"/>
        <end position="483"/>
    </location>
</feature>
<feature type="compositionally biased region" description="Basic residues" evidence="3">
    <location>
        <begin position="491"/>
        <end position="536"/>
    </location>
</feature>
<feature type="compositionally biased region" description="Low complexity" evidence="3">
    <location>
        <begin position="537"/>
        <end position="546"/>
    </location>
</feature>
<feature type="compositionally biased region" description="Basic residues" evidence="3">
    <location>
        <begin position="547"/>
        <end position="564"/>
    </location>
</feature>
<feature type="compositionally biased region" description="Basic residues" evidence="3">
    <location>
        <begin position="571"/>
        <end position="723"/>
    </location>
</feature>
<feature type="compositionally biased region" description="Basic residues" evidence="3">
    <location>
        <begin position="732"/>
        <end position="742"/>
    </location>
</feature>
<feature type="compositionally biased region" description="Low complexity" evidence="3">
    <location>
        <begin position="790"/>
        <end position="805"/>
    </location>
</feature>
<feature type="compositionally biased region" description="Basic residues" evidence="3">
    <location>
        <begin position="806"/>
        <end position="816"/>
    </location>
</feature>
<feature type="compositionally biased region" description="Low complexity" evidence="3">
    <location>
        <begin position="828"/>
        <end position="841"/>
    </location>
</feature>
<feature type="compositionally biased region" description="Polar residues" evidence="3">
    <location>
        <begin position="849"/>
        <end position="869"/>
    </location>
</feature>
<feature type="compositionally biased region" description="Low complexity" evidence="3">
    <location>
        <begin position="901"/>
        <end position="917"/>
    </location>
</feature>
<feature type="compositionally biased region" description="Low complexity" evidence="3">
    <location>
        <begin position="924"/>
        <end position="945"/>
    </location>
</feature>
<feature type="compositionally biased region" description="Low complexity" evidence="3">
    <location>
        <begin position="1008"/>
        <end position="1017"/>
    </location>
</feature>
<feature type="compositionally biased region" description="Polar residues" evidence="3">
    <location>
        <begin position="1040"/>
        <end position="1064"/>
    </location>
</feature>
<feature type="compositionally biased region" description="Polar residues" evidence="3">
    <location>
        <begin position="1071"/>
        <end position="1092"/>
    </location>
</feature>
<feature type="compositionally biased region" description="Low complexity" evidence="3">
    <location>
        <begin position="1093"/>
        <end position="1104"/>
    </location>
</feature>
<feature type="compositionally biased region" description="Polar residues" evidence="3">
    <location>
        <begin position="1132"/>
        <end position="1159"/>
    </location>
</feature>
<feature type="compositionally biased region" description="Basic and acidic residues" evidence="3">
    <location>
        <begin position="1204"/>
        <end position="1214"/>
    </location>
</feature>
<feature type="compositionally biased region" description="Polar residues" evidence="3">
    <location>
        <begin position="1216"/>
        <end position="1233"/>
    </location>
</feature>
<feature type="compositionally biased region" description="Polar residues" evidence="3">
    <location>
        <begin position="1283"/>
        <end position="1292"/>
    </location>
</feature>
<feature type="compositionally biased region" description="Polar residues" evidence="3">
    <location>
        <begin position="1318"/>
        <end position="1328"/>
    </location>
</feature>
<feature type="compositionally biased region" description="Polar residues" evidence="3">
    <location>
        <begin position="1376"/>
        <end position="1386"/>
    </location>
</feature>
<feature type="compositionally biased region" description="Low complexity" evidence="3">
    <location>
        <begin position="1441"/>
        <end position="1452"/>
    </location>
</feature>
<feature type="compositionally biased region" description="Polar residues" evidence="3">
    <location>
        <begin position="1453"/>
        <end position="1463"/>
    </location>
</feature>
<feature type="compositionally biased region" description="Polar residues" evidence="3">
    <location>
        <begin position="1534"/>
        <end position="1544"/>
    </location>
</feature>
<feature type="compositionally biased region" description="Basic and acidic residues" evidence="3">
    <location>
        <begin position="1555"/>
        <end position="1567"/>
    </location>
</feature>
<feature type="compositionally biased region" description="Basic residues" evidence="3">
    <location>
        <begin position="1568"/>
        <end position="1577"/>
    </location>
</feature>
<feature type="compositionally biased region" description="Low complexity" evidence="3">
    <location>
        <begin position="1638"/>
        <end position="1657"/>
    </location>
</feature>
<feature type="compositionally biased region" description="Basic residues" evidence="3">
    <location>
        <begin position="1681"/>
        <end position="1691"/>
    </location>
</feature>
<feature type="compositionally biased region" description="Basic residues" evidence="3">
    <location>
        <begin position="1769"/>
        <end position="1789"/>
    </location>
</feature>
<feature type="compositionally biased region" description="Basic residues" evidence="3">
    <location>
        <begin position="1798"/>
        <end position="1816"/>
    </location>
</feature>
<feature type="compositionally biased region" description="Basic residues" evidence="3">
    <location>
        <begin position="1834"/>
        <end position="1854"/>
    </location>
</feature>
<feature type="compositionally biased region" description="Basic residues" evidence="3">
    <location>
        <begin position="1862"/>
        <end position="2068"/>
    </location>
</feature>
<feature type="compositionally biased region" description="Low complexity" evidence="3">
    <location>
        <begin position="2070"/>
        <end position="2095"/>
    </location>
</feature>
<feature type="compositionally biased region" description="Polar residues" evidence="3">
    <location>
        <begin position="2097"/>
        <end position="2124"/>
    </location>
</feature>
<feature type="compositionally biased region" description="Polar residues" evidence="3">
    <location>
        <begin position="2317"/>
        <end position="2334"/>
    </location>
</feature>
<feature type="compositionally biased region" description="Polar residues" evidence="3">
    <location>
        <begin position="2426"/>
        <end position="2439"/>
    </location>
</feature>
<feature type="compositionally biased region" description="Polar residues" evidence="3">
    <location>
        <begin position="2455"/>
        <end position="2473"/>
    </location>
</feature>
<feature type="compositionally biased region" description="Low complexity" evidence="3">
    <location>
        <begin position="2474"/>
        <end position="2487"/>
    </location>
</feature>
<feature type="compositionally biased region" description="Low complexity" evidence="3">
    <location>
        <begin position="2515"/>
        <end position="2526"/>
    </location>
</feature>
<feature type="compositionally biased region" description="Low complexity" evidence="3">
    <location>
        <begin position="2533"/>
        <end position="2567"/>
    </location>
</feature>
<feature type="compositionally biased region" description="Low complexity" evidence="3">
    <location>
        <begin position="2608"/>
        <end position="2648"/>
    </location>
</feature>
<feature type="compositionally biased region" description="Pro residues" evidence="3">
    <location>
        <begin position="2651"/>
        <end position="2668"/>
    </location>
</feature>
<feature type="compositionally biased region" description="Basic and acidic residues" evidence="3">
    <location>
        <begin position="2669"/>
        <end position="2689"/>
    </location>
</feature>
<feature type="compositionally biased region" description="Low complexity" evidence="3">
    <location>
        <begin position="2707"/>
        <end position="2716"/>
    </location>
</feature>
<feature type="compositionally biased region" description="Basic and acidic residues" evidence="3">
    <location>
        <begin position="2717"/>
        <end position="2729"/>
    </location>
</feature>
<feature type="compositionally biased region" description="Basic residues" evidence="3">
    <location>
        <begin position="2743"/>
        <end position="2752"/>
    </location>
</feature>
<feature type="modified residue" description="N-acetylmethionine" evidence="18 42 43">
    <location>
        <position position="1"/>
    </location>
</feature>
<feature type="modified residue" description="N6-acetyllysine" evidence="1">
    <location>
        <position position="101"/>
    </location>
</feature>
<feature type="modified residue" description="Phosphotyrosine" evidence="39">
    <location>
        <position position="145"/>
    </location>
</feature>
<feature type="modified residue" description="N6-acetyllysine" evidence="38">
    <location>
        <position position="169"/>
    </location>
</feature>
<feature type="modified residue" description="Phosphoserine" evidence="40">
    <location>
        <position position="220"/>
    </location>
</feature>
<feature type="modified residue" description="Phosphoserine" evidence="40">
    <location>
        <position position="222"/>
    </location>
</feature>
<feature type="modified residue" description="Phosphothreonine" evidence="40">
    <location>
        <position position="286"/>
    </location>
</feature>
<feature type="modified residue" description="Phosphoserine" evidence="37 40 44 46">
    <location>
        <position position="295"/>
    </location>
</feature>
<feature type="modified residue" description="Phosphoserine" evidence="37 40 41 44 46">
    <location>
        <position position="297"/>
    </location>
</feature>
<feature type="modified residue" description="Phosphoserine" evidence="40 44 46">
    <location>
        <position position="300"/>
    </location>
</feature>
<feature type="modified residue" description="Phosphoserine" evidence="37 39 44">
    <location>
        <position position="322"/>
    </location>
</feature>
<feature type="modified residue" description="Phosphoserine" evidence="37 39 44 46">
    <location>
        <position position="323"/>
    </location>
</feature>
<feature type="modified residue" description="Phosphoserine" evidence="37 39 40 41 46">
    <location>
        <position position="351"/>
    </location>
</feature>
<feature type="modified residue" description="Phosphoserine" evidence="37 39 40 41 46">
    <location>
        <position position="353"/>
    </location>
</feature>
<feature type="modified residue" description="Phosphoserine" evidence="39">
    <location>
        <position position="357"/>
    </location>
</feature>
<feature type="modified residue" description="Phosphoserine" evidence="39">
    <location>
        <position position="358"/>
    </location>
</feature>
<feature type="modified residue" description="Phosphothreonine" evidence="39">
    <location>
        <position position="359"/>
    </location>
</feature>
<feature type="modified residue" description="Phosphothreonine" evidence="32 39 40 44">
    <location>
        <position position="367"/>
    </location>
</feature>
<feature type="modified residue" description="Phosphoserine" evidence="32 34 37 39 40 41 44 46">
    <location>
        <position position="377"/>
    </location>
</feature>
<feature type="modified residue" description="Phosphothreonine" evidence="46">
    <location>
        <position position="383"/>
    </location>
</feature>
<feature type="modified residue" description="Phosphothreonine" evidence="46">
    <location>
        <position position="384"/>
    </location>
</feature>
<feature type="modified residue" description="Phosphoserine" evidence="37 44 46">
    <location>
        <position position="387"/>
    </location>
</feature>
<feature type="modified residue" description="Phosphoserine" evidence="46">
    <location>
        <position position="395"/>
    </location>
</feature>
<feature type="modified residue" description="Phosphoserine" evidence="37 41 46">
    <location>
        <position position="398"/>
    </location>
</feature>
<feature type="modified residue" description="Phosphoserine" evidence="41 46">
    <location>
        <position position="404"/>
    </location>
</feature>
<feature type="modified residue" description="Phosphoserine" evidence="41 46">
    <location>
        <position position="408"/>
    </location>
</feature>
<feature type="modified residue" description="Phosphoserine" evidence="40 41 44 46">
    <location>
        <position position="424"/>
    </location>
</feature>
<feature type="modified residue" description="Phosphoserine" evidence="37 44">
    <location>
        <position position="435"/>
    </location>
</feature>
<feature type="modified residue" description="Phosphoserine" evidence="44">
    <location>
        <position position="436"/>
    </location>
</feature>
<feature type="modified residue" description="Phosphoserine" evidence="44">
    <location>
        <position position="437"/>
    </location>
</feature>
<feature type="modified residue" description="Phosphoserine" evidence="33 37 40 41 44 46">
    <location>
        <position position="440"/>
    </location>
</feature>
<feature type="modified residue" description="Phosphoserine" evidence="40">
    <location>
        <position position="454"/>
    </location>
</feature>
<feature type="modified residue" description="Phosphoserine" evidence="40">
    <location>
        <position position="484"/>
    </location>
</feature>
<feature type="modified residue" description="Phosphoserine" evidence="40">
    <location>
        <position position="486"/>
    </location>
</feature>
<feature type="modified residue" description="Phosphoserine" evidence="44">
    <location>
        <position position="506"/>
    </location>
</feature>
<feature type="modified residue" description="Phosphoserine" evidence="44">
    <location>
        <position position="508"/>
    </location>
</feature>
<feature type="modified residue" description="Phosphoserine" evidence="44">
    <location>
        <position position="510"/>
    </location>
</feature>
<feature type="modified residue" description="Phosphoserine" evidence="44">
    <location>
        <position position="534"/>
    </location>
</feature>
<feature type="modified residue" description="Phosphoserine" evidence="44">
    <location>
        <position position="536"/>
    </location>
</feature>
<feature type="modified residue" description="Phosphoserine" evidence="44">
    <location>
        <position position="543"/>
    </location>
</feature>
<feature type="modified residue" description="Phosphoserine" evidence="44">
    <location>
        <position position="702"/>
    </location>
</feature>
<feature type="modified residue" description="Phosphoserine" evidence="44">
    <location>
        <position position="704"/>
    </location>
</feature>
<feature type="modified residue" description="Phosphoserine" evidence="44">
    <location>
        <position position="706"/>
    </location>
</feature>
<feature type="modified residue" description="Phosphoserine" evidence="37 40 41 44">
    <location>
        <position position="778"/>
    </location>
</feature>
<feature type="modified residue" description="Phosphoserine" evidence="37 44">
    <location>
        <position position="780"/>
    </location>
</feature>
<feature type="modified residue" description="Phosphoserine" evidence="37 41">
    <location>
        <position position="783"/>
    </location>
</feature>
<feature type="modified residue" description="Phosphoserine" evidence="39">
    <location>
        <position position="846"/>
    </location>
</feature>
<feature type="modified residue" description="Phosphoserine" evidence="1">
    <location>
        <position position="854"/>
    </location>
</feature>
<feature type="modified residue" description="Phosphothreonine" evidence="1">
    <location>
        <position position="856"/>
    </location>
</feature>
<feature type="modified residue" description="Phosphoserine" evidence="37 39 44">
    <location>
        <position position="857"/>
    </location>
</feature>
<feature type="modified residue" description="Phosphoserine" evidence="37 44">
    <location>
        <position position="864"/>
    </location>
</feature>
<feature type="modified residue" description="Phosphothreonine" evidence="37 39 40 44 46">
    <location>
        <position position="866"/>
    </location>
</feature>
<feature type="modified residue" description="Phosphoserine" evidence="32 40">
    <location>
        <position position="871"/>
    </location>
</feature>
<feature type="modified residue" description="Phosphoserine" evidence="40">
    <location>
        <position position="875"/>
    </location>
</feature>
<feature type="modified residue" description="Phosphoserine" evidence="32 39 40 41 44">
    <location>
        <position position="876"/>
    </location>
</feature>
<feature type="modified residue" description="Phosphoserine" evidence="41">
    <location>
        <position position="908"/>
    </location>
</feature>
<feature type="modified residue" description="Phosphoserine" evidence="46">
    <location>
        <position position="935"/>
    </location>
</feature>
<feature type="modified residue" description="Phosphoserine" evidence="37 40 44">
    <location>
        <position position="950"/>
    </location>
</feature>
<feature type="modified residue" description="Phosphoserine" evidence="37 39 44">
    <location>
        <position position="952"/>
    </location>
</feature>
<feature type="modified residue" description="Phosphoserine" evidence="32 37 39 44">
    <location>
        <position position="954"/>
    </location>
</feature>
<feature type="modified residue" description="Phosphoserine" evidence="37">
    <location>
        <position position="957"/>
    </location>
</feature>
<feature type="modified residue" description="Phosphoserine" evidence="37">
    <location>
        <position position="968"/>
    </location>
</feature>
<feature type="modified residue" description="Phosphoserine" evidence="37">
    <location>
        <position position="970"/>
    </location>
</feature>
<feature type="modified residue" description="Phosphoserine" evidence="37">
    <location>
        <position position="972"/>
    </location>
</feature>
<feature type="modified residue" description="Phosphoserine" evidence="40 41">
    <location>
        <position position="973"/>
    </location>
</feature>
<feature type="modified residue" description="Phosphoserine" evidence="37 40 41">
    <location>
        <position position="974"/>
    </location>
</feature>
<feature type="modified residue" description="Phosphothreonine" evidence="41">
    <location>
        <position position="977"/>
    </location>
</feature>
<feature type="modified residue" description="Phosphothreonine" evidence="37 40 44 46">
    <location>
        <position position="983"/>
    </location>
</feature>
<feature type="modified residue" description="Phosphoserine" evidence="44">
    <location>
        <position position="992"/>
    </location>
</feature>
<feature type="modified residue" description="Phosphoserine" evidence="37 40 44 46">
    <location>
        <position position="994"/>
    </location>
</feature>
<feature type="modified residue" description="Phosphotyrosine" evidence="46">
    <location>
        <position position="996"/>
    </location>
</feature>
<feature type="modified residue" description="Phosphothreonine" evidence="33 37 39 40 41 44 46">
    <location>
        <position position="1003"/>
    </location>
</feature>
<feature type="modified residue" description="Phosphoserine" evidence="44 46">
    <location>
        <position position="1010"/>
    </location>
</feature>
<feature type="modified residue" description="Phosphoserine" evidence="37 40 44 46">
    <location>
        <position position="1014"/>
    </location>
</feature>
<feature type="modified residue" description="Phosphoserine" evidence="1">
    <location>
        <position position="1024"/>
    </location>
</feature>
<feature type="modified residue" description="Phosphoserine" evidence="37 40">
    <location>
        <position position="1028"/>
    </location>
</feature>
<feature type="modified residue" description="Phosphoserine" evidence="37">
    <location>
        <position position="1032"/>
    </location>
</feature>
<feature type="modified residue" description="Phosphoserine" evidence="1">
    <location>
        <position position="1042"/>
    </location>
</feature>
<feature type="modified residue" description="Phosphothreonine" evidence="41">
    <location>
        <position position="1043"/>
    </location>
</feature>
<feature type="modified residue" description="Phosphotyrosine" evidence="46">
    <location>
        <position position="1049"/>
    </location>
</feature>
<feature type="modified residue" description="Phosphoserine" evidence="37 44">
    <location>
        <position position="1064"/>
    </location>
</feature>
<feature type="modified residue" description="Phosphoserine" evidence="37 41 44">
    <location>
        <position position="1069"/>
    </location>
</feature>
<feature type="modified residue" description="Phosphoserine" evidence="32 37">
    <location>
        <position position="1072"/>
    </location>
</feature>
<feature type="modified residue" description="Phosphoserine" evidence="32 37">
    <location>
        <position position="1073"/>
    </location>
</feature>
<feature type="modified residue" description="Phosphoserine" evidence="40 44 46">
    <location>
        <position position="1083"/>
    </location>
</feature>
<feature type="modified residue" description="Phosphoserine" evidence="37 39 40 41">
    <location>
        <position position="1099"/>
    </location>
</feature>
<feature type="modified residue" description="Phosphoserine" evidence="37 39 40 41">
    <location>
        <position position="1101"/>
    </location>
</feature>
<feature type="modified residue" description="Phosphoserine" evidence="32 37 39">
    <location>
        <position position="1102"/>
    </location>
</feature>
<feature type="modified residue" description="Phosphoserine" evidence="37 39 40 41 44">
    <location>
        <position position="1103"/>
    </location>
</feature>
<feature type="modified residue" description="Phosphothreonine" evidence="39">
    <location>
        <position position="1106"/>
    </location>
</feature>
<feature type="modified residue" description="Phosphoserine" evidence="37 44">
    <location>
        <position position="1112"/>
    </location>
</feature>
<feature type="modified residue" description="Phosphoserine" evidence="40 44">
    <location>
        <position position="1122"/>
    </location>
</feature>
<feature type="modified residue" description="Phosphoserine" evidence="40 41 44 46">
    <location>
        <position position="1124"/>
    </location>
</feature>
<feature type="modified residue" description="Phosphoserine" evidence="41">
    <location>
        <position position="1129"/>
    </location>
</feature>
<feature type="modified residue" description="Phosphoserine" evidence="33 40 41 44 46">
    <location>
        <position position="1132"/>
    </location>
</feature>
<feature type="modified residue" description="Phosphoserine" evidence="40 44 46">
    <location>
        <position position="1152"/>
    </location>
</feature>
<feature type="modified residue" description="Phosphoserine" evidence="37 40 41 44 46">
    <location>
        <position position="1179"/>
    </location>
</feature>
<feature type="modified residue" description="Phosphoserine" evidence="33 37 40 41 44 46">
    <location>
        <position position="1188"/>
    </location>
</feature>
<feature type="modified residue" description="Phosphoserine" evidence="44">
    <location>
        <position position="1198"/>
    </location>
</feature>
<feature type="modified residue" description="Phosphothreonine" evidence="37 44">
    <location>
        <position position="1208"/>
    </location>
</feature>
<feature type="modified residue" description="Phosphoserine" evidence="39">
    <location>
        <position position="1214"/>
    </location>
</feature>
<feature type="modified residue" description="Phosphoserine" evidence="40 41 46">
    <location>
        <position position="1219"/>
    </location>
</feature>
<feature type="modified residue" description="Phosphoserine" evidence="44">
    <location>
        <position position="1227"/>
    </location>
</feature>
<feature type="modified residue" description="Phosphoserine" evidence="44">
    <location>
        <position position="1254"/>
    </location>
</feature>
<feature type="modified residue" description="Phosphoserine" evidence="44">
    <location>
        <position position="1257"/>
    </location>
</feature>
<feature type="modified residue" description="Phosphoserine" evidence="44">
    <location>
        <position position="1258"/>
    </location>
</feature>
<feature type="modified residue" description="Phosphoserine" evidence="1">
    <location>
        <position position="1266"/>
    </location>
</feature>
<feature type="modified residue" description="Phosphoserine" evidence="1">
    <location>
        <position position="1270"/>
    </location>
</feature>
<feature type="modified residue" description="Phosphoserine" evidence="1">
    <location>
        <position position="1271"/>
    </location>
</feature>
<feature type="modified residue" description="Phosphoserine" evidence="46">
    <location>
        <position position="1311"/>
    </location>
</feature>
<feature type="modified residue" description="Phosphoserine" evidence="37 39 44">
    <location>
        <position position="1318"/>
    </location>
</feature>
<feature type="modified residue" description="Phosphoserine" evidence="37 39 40 41 44 46">
    <location>
        <position position="1320"/>
    </location>
</feature>
<feature type="modified residue" description="Phosphoserine" evidence="37 39 40 44 46">
    <location>
        <position position="1326"/>
    </location>
</feature>
<feature type="modified residue" description="Phosphoserine" evidence="33 37 39 40 41 44 46">
    <location>
        <position position="1329"/>
    </location>
</feature>
<feature type="modified residue" description="Phosphoserine" evidence="40">
    <location>
        <position position="1336"/>
    </location>
</feature>
<feature type="modified residue" description="Phosphoserine" evidence="1">
    <location>
        <position position="1348"/>
    </location>
</feature>
<feature type="modified residue" description="Phosphoserine" evidence="40">
    <location>
        <position position="1368"/>
    </location>
</feature>
<feature type="modified residue" description="Phosphoserine" evidence="39 41 44">
    <location>
        <position position="1382"/>
    </location>
</feature>
<feature type="modified residue" description="Phosphoserine" evidence="1">
    <location>
        <position position="1383"/>
    </location>
</feature>
<feature type="modified residue" description="Phosphoserine" evidence="1">
    <location>
        <position position="1384"/>
    </location>
</feature>
<feature type="modified residue" description="Phosphoserine" evidence="37 39 40 41 44 46">
    <location>
        <position position="1387"/>
    </location>
</feature>
<feature type="modified residue" description="Phosphoserine" evidence="37 39 44">
    <location>
        <position position="1401"/>
    </location>
</feature>
<feature type="modified residue" description="Phosphoserine" evidence="39 44">
    <location>
        <position position="1403"/>
    </location>
</feature>
<feature type="modified residue" description="Phosphoserine" evidence="37 39 40 41 44">
    <location>
        <position position="1404"/>
    </location>
</feature>
<feature type="modified residue" description="Phosphothreonine" evidence="37 40 41 44">
    <location>
        <position position="1413"/>
    </location>
</feature>
<feature type="modified residue" description="Phosphoserine" evidence="37 40 41">
    <location>
        <position position="1415"/>
    </location>
</feature>
<feature type="modified residue" description="Phosphoserine" evidence="40">
    <location>
        <position position="1421"/>
    </location>
</feature>
<feature type="modified residue" description="Phosphoserine" evidence="1">
    <location>
        <position position="1423"/>
    </location>
</feature>
<feature type="modified residue" description="Phosphoserine" evidence="41">
    <location>
        <position position="1424"/>
    </location>
</feature>
<feature type="modified residue" description="Phosphothreonine" evidence="40 44">
    <location>
        <position position="1434"/>
    </location>
</feature>
<feature type="modified residue" description="Phosphoserine" evidence="37 41 44">
    <location>
        <position position="1444"/>
    </location>
</feature>
<feature type="modified residue" description="Phosphoserine" evidence="37">
    <location>
        <position position="1451"/>
    </location>
</feature>
<feature type="modified residue" description="Phosphothreonine" evidence="37">
    <location>
        <position position="1453"/>
    </location>
</feature>
<feature type="modified residue" description="Phosphoserine" evidence="41 44">
    <location>
        <position position="1458"/>
    </location>
</feature>
<feature type="modified residue" description="Phosphoserine" evidence="40">
    <location>
        <position position="1460"/>
    </location>
</feature>
<feature type="modified residue" description="Phosphoserine" evidence="40">
    <location>
        <position position="1462"/>
    </location>
</feature>
<feature type="modified residue" description="Phosphoserine" evidence="40 41 44">
    <location>
        <position position="1463"/>
    </location>
</feature>
<feature type="modified residue" description="Phosphothreonine" evidence="37">
    <location>
        <position position="1472"/>
    </location>
</feature>
<feature type="modified residue" description="Phosphoserine" evidence="40">
    <location>
        <position position="1482"/>
    </location>
</feature>
<feature type="modified residue" description="Phosphoserine" evidence="40">
    <location>
        <position position="1483"/>
    </location>
</feature>
<feature type="modified residue" description="Phosphothreonine" evidence="33 40 44">
    <location>
        <position position="1492"/>
    </location>
</feature>
<feature type="modified residue" description="Phosphoserine" evidence="40 41">
    <location>
        <position position="1497"/>
    </location>
</feature>
<feature type="modified residue" description="Phosphoserine" evidence="40 41 44">
    <location>
        <position position="1499"/>
    </location>
</feature>
<feature type="modified residue" description="Phosphoserine" evidence="40">
    <location>
        <position position="1501"/>
    </location>
</feature>
<feature type="modified residue" description="Phosphoserine" evidence="40 41">
    <location>
        <position position="1502"/>
    </location>
</feature>
<feature type="modified residue" description="Phosphothreonine" evidence="37">
    <location>
        <position position="1511"/>
    </location>
</feature>
<feature type="modified residue" description="Phosphoserine" evidence="41">
    <location>
        <position position="1517"/>
    </location>
</feature>
<feature type="modified residue" description="Phosphoserine" evidence="41">
    <location>
        <position position="1519"/>
    </location>
</feature>
<feature type="modified residue" description="Phosphoserine" evidence="41">
    <location>
        <position position="1521"/>
    </location>
</feature>
<feature type="modified residue" description="Phosphoserine" evidence="37 41">
    <location>
        <position position="1522"/>
    </location>
</feature>
<feature type="modified residue" description="Phosphothreonine" evidence="35 37 44">
    <location>
        <position position="1531"/>
    </location>
</feature>
<feature type="modified residue" description="Phosphoserine" evidence="37 44">
    <location>
        <position position="1537"/>
    </location>
</feature>
<feature type="modified residue" description="Phosphoserine" evidence="37 44">
    <location>
        <position position="1539"/>
    </location>
</feature>
<feature type="modified residue" description="Phosphoserine" evidence="37 44">
    <location>
        <position position="1541"/>
    </location>
</feature>
<feature type="modified residue" description="Phosphoserine" evidence="37 41 44">
    <location>
        <position position="1542"/>
    </location>
</feature>
<feature type="modified residue" description="Phosphoserine" evidence="37 41 44">
    <location>
        <position position="1552"/>
    </location>
</feature>
<feature type="modified residue" description="Phosphoserine" evidence="41">
    <location>
        <position position="1577"/>
    </location>
</feature>
<feature type="modified residue" description="Phosphoserine" evidence="41">
    <location>
        <position position="1579"/>
    </location>
</feature>
<feature type="modified residue" description="Phosphoserine" evidence="41">
    <location>
        <position position="1581"/>
    </location>
</feature>
<feature type="modified residue" description="Phosphoserine" evidence="41">
    <location>
        <position position="1582"/>
    </location>
</feature>
<feature type="modified residue" description="Phosphoserine" evidence="41">
    <location>
        <position position="1598"/>
    </location>
</feature>
<feature type="modified residue" description="Phosphoserine" evidence="41">
    <location>
        <position position="1600"/>
    </location>
</feature>
<feature type="modified residue" description="Phosphoserine" evidence="41">
    <location>
        <position position="1601"/>
    </location>
</feature>
<feature type="modified residue" description="Phosphoserine" evidence="1">
    <location>
        <position position="1616"/>
    </location>
</feature>
<feature type="modified residue" description="Phosphoserine" evidence="1">
    <location>
        <position position="1620"/>
    </location>
</feature>
<feature type="modified residue" description="Phosphoserine" evidence="40">
    <location>
        <position position="1621"/>
    </location>
</feature>
<feature type="modified residue" description="Phosphoserine" evidence="41 44">
    <location>
        <position position="1648"/>
    </location>
</feature>
<feature type="modified residue" description="Phosphoserine" evidence="41">
    <location>
        <position position="1658"/>
    </location>
</feature>
<feature type="modified residue" description="Phosphoserine" evidence="37">
    <location>
        <position position="1691"/>
    </location>
</feature>
<feature type="modified residue" description="Phosphoserine" evidence="37">
    <location>
        <position position="1693"/>
    </location>
</feature>
<feature type="modified residue" description="Phosphoserine" evidence="37 41 44">
    <location>
        <position position="1694"/>
    </location>
</feature>
<feature type="modified residue" description="Phosphothreonine" evidence="37">
    <location>
        <position position="1698"/>
    </location>
</feature>
<feature type="modified residue" description="Phosphoserine" evidence="41">
    <location>
        <position position="1727"/>
    </location>
</feature>
<feature type="modified residue" description="Phosphoserine" evidence="41">
    <location>
        <position position="1729"/>
    </location>
</feature>
<feature type="modified residue" description="Phosphoserine" evidence="41">
    <location>
        <position position="1731"/>
    </location>
</feature>
<feature type="modified residue" description="Phosphoserine" evidence="41">
    <location>
        <position position="1732"/>
    </location>
</feature>
<feature type="modified residue" description="Phosphoserine" evidence="40 41">
    <location>
        <position position="1762"/>
    </location>
</feature>
<feature type="modified residue" description="Phosphoserine" evidence="40 41">
    <location>
        <position position="1764"/>
    </location>
</feature>
<feature type="modified residue" description="Phosphoserine" evidence="41">
    <location>
        <position position="1818"/>
    </location>
</feature>
<feature type="modified residue" description="Phosphoserine" evidence="41">
    <location>
        <position position="1822"/>
    </location>
</feature>
<feature type="modified residue" description="Phosphoserine" evidence="40 41 44">
    <location>
        <position position="1854"/>
    </location>
</feature>
<feature type="modified residue" description="Phosphoserine" evidence="40 44">
    <location>
        <position position="1857"/>
    </location>
</feature>
<feature type="modified residue" description="Phosphoserine" evidence="37 44">
    <location>
        <position position="1876"/>
    </location>
</feature>
<feature type="modified residue" description="Phosphoserine" evidence="37 41 44">
    <location>
        <position position="1878"/>
    </location>
</feature>
<feature type="modified residue" description="Phosphothreonine" evidence="37 44">
    <location>
        <position position="1880"/>
    </location>
</feature>
<feature type="modified residue" description="Phosphoserine" evidence="41">
    <location>
        <position position="1884"/>
    </location>
</feature>
<feature type="modified residue" description="Phosphoserine" evidence="40 41">
    <location>
        <position position="1890"/>
    </location>
</feature>
<feature type="modified residue" description="Phosphothreonine" evidence="40">
    <location>
        <position position="1892"/>
    </location>
</feature>
<feature type="modified residue" description="Phosphoserine" evidence="40">
    <location>
        <position position="1893"/>
    </location>
</feature>
<feature type="modified residue" description="Phosphoserine" evidence="40 41">
    <location>
        <position position="1916"/>
    </location>
</feature>
<feature type="modified residue" description="Phosphoserine" evidence="40 41">
    <location>
        <position position="1919"/>
    </location>
</feature>
<feature type="modified residue" description="Phosphoserine" evidence="37">
    <location>
        <position position="1923"/>
    </location>
</feature>
<feature type="modified residue" description="Phosphoserine" evidence="37 40 41">
    <location>
        <position position="1925"/>
    </location>
</feature>
<feature type="modified residue" description="Phosphothreonine" evidence="37 40 41">
    <location>
        <position position="1927"/>
    </location>
</feature>
<feature type="modified residue" description="Phosphothreonine" evidence="41">
    <location>
        <position position="1931"/>
    </location>
</feature>
<feature type="modified residue" description="Phosphoserine" evidence="37">
    <location>
        <position position="1946"/>
    </location>
</feature>
<feature type="modified residue" description="Phosphoserine" evidence="37 40 41">
    <location>
        <position position="1948"/>
    </location>
</feature>
<feature type="modified residue" description="Phosphothreonine" evidence="37 40 41">
    <location>
        <position position="1950"/>
    </location>
</feature>
<feature type="modified residue" description="Phosphothreonine" evidence="41">
    <location>
        <position position="1954"/>
    </location>
</feature>
<feature type="modified residue" description="Phosphoserine" evidence="37">
    <location>
        <position position="1958"/>
    </location>
</feature>
<feature type="modified residue" description="Phosphoserine" evidence="37 40 41">
    <location>
        <position position="1960"/>
    </location>
</feature>
<feature type="modified residue" description="Phosphothreonine" evidence="37 40 41">
    <location>
        <position position="1962"/>
    </location>
</feature>
<feature type="modified residue" description="Phosphothreonine" evidence="41">
    <location>
        <position position="1966"/>
    </location>
</feature>
<feature type="modified residue" description="Phosphoserine" evidence="37 41">
    <location>
        <position position="1970"/>
    </location>
</feature>
<feature type="modified residue" description="Phosphoserine" evidence="40 41">
    <location>
        <position position="1972"/>
    </location>
</feature>
<feature type="modified residue" description="Phosphoserine" evidence="40 41">
    <location>
        <position position="1975"/>
    </location>
</feature>
<feature type="modified residue" description="Phosphothreonine" evidence="41">
    <location>
        <position position="1978"/>
    </location>
</feature>
<feature type="modified residue" description="Phosphoserine" evidence="40 41">
    <location>
        <position position="1984"/>
    </location>
</feature>
<feature type="modified residue" description="Phosphoserine" evidence="40 41">
    <location>
        <position position="1987"/>
    </location>
</feature>
<feature type="modified residue" description="Phosphoserine" evidence="40 41">
    <location>
        <position position="1996"/>
    </location>
</feature>
<feature type="modified residue" description="Phosphoserine" evidence="40 41">
    <location>
        <position position="1999"/>
    </location>
</feature>
<feature type="modified residue" description="Phosphoserine" evidence="40 41">
    <location>
        <position position="2008"/>
    </location>
</feature>
<feature type="modified residue" description="Phosphoserine" evidence="40 41">
    <location>
        <position position="2011"/>
    </location>
</feature>
<feature type="modified residue" description="Phosphoserine" evidence="44">
    <location>
        <position position="2018"/>
    </location>
</feature>
<feature type="modified residue" description="Phosphoserine" evidence="41 44">
    <location>
        <position position="2020"/>
    </location>
</feature>
<feature type="modified residue" description="Phosphothreonine" evidence="41 44">
    <location>
        <position position="2022"/>
    </location>
</feature>
<feature type="modified residue" description="Phosphoserine" evidence="44">
    <location>
        <position position="2030"/>
    </location>
</feature>
<feature type="modified residue" description="Phosphoserine" evidence="41 44">
    <location>
        <position position="2032"/>
    </location>
</feature>
<feature type="modified residue" description="Phosphothreonine" evidence="41 44">
    <location>
        <position position="2034"/>
    </location>
</feature>
<feature type="modified residue" description="Phosphoserine" evidence="44">
    <location>
        <position position="2042"/>
    </location>
</feature>
<feature type="modified residue" description="Phosphoserine" evidence="40 41 44">
    <location>
        <position position="2044"/>
    </location>
</feature>
<feature type="modified residue" description="Phosphoserine" evidence="40 41 44">
    <location>
        <position position="2046"/>
    </location>
</feature>
<feature type="modified residue" description="Phosphoserine" evidence="41 44">
    <location>
        <position position="2067"/>
    </location>
</feature>
<feature type="modified residue" description="Phosphothreonine" evidence="40 41 44">
    <location>
        <position position="2069"/>
    </location>
</feature>
<feature type="modified residue" description="Phosphoserine" evidence="40 41 44">
    <location>
        <position position="2071"/>
    </location>
</feature>
<feature type="modified residue" description="Phosphoserine" evidence="41">
    <location>
        <position position="2090"/>
    </location>
</feature>
<feature type="modified residue" description="Phosphothreonine" evidence="41">
    <location>
        <position position="2092"/>
    </location>
</feature>
<feature type="modified residue" description="Phosphoserine" evidence="37 39 44">
    <location>
        <position position="2100"/>
    </location>
</feature>
<feature type="modified residue" description="Phosphoserine" evidence="37 39 40 44">
    <location>
        <position position="2102"/>
    </location>
</feature>
<feature type="modified residue" description="Phosphothreonine" evidence="37 39 40 41 44">
    <location>
        <position position="2104"/>
    </location>
</feature>
<feature type="modified residue" description="Phosphoserine" evidence="37">
    <location>
        <position position="2118"/>
    </location>
</feature>
<feature type="modified residue" description="Phosphoserine" evidence="37 44">
    <location>
        <position position="2121"/>
    </location>
</feature>
<feature type="modified residue" description="Phosphoserine" evidence="37 40 41 44">
    <location>
        <position position="2123"/>
    </location>
</feature>
<feature type="modified residue" description="Phosphoserine" evidence="37 39 40 41 44">
    <location>
        <position position="2132"/>
    </location>
</feature>
<feature type="modified residue" description="Phosphothreonine" evidence="37">
    <location>
        <position position="2144"/>
    </location>
</feature>
<feature type="modified residue" description="Omega-N-methylarginine" evidence="45">
    <location>
        <position position="2194"/>
    </location>
</feature>
<feature type="modified residue" description="Omega-N-methylarginine" evidence="45">
    <location>
        <position position="2207"/>
    </location>
</feature>
<feature type="modified residue" description="Omega-N-methylarginine" evidence="45">
    <location>
        <position position="2231"/>
    </location>
</feature>
<feature type="modified residue" description="Omega-N-methylarginine" evidence="45">
    <location>
        <position position="2246"/>
    </location>
</feature>
<feature type="modified residue" description="Phosphoserine" evidence="32 36 37 39 40 41 44 46">
    <location>
        <position position="2272"/>
    </location>
</feature>
<feature type="modified residue" description="Omega-N-methylarginine" evidence="45">
    <location>
        <position position="2274"/>
    </location>
</feature>
<feature type="modified residue" description="Omega-N-methylarginine" evidence="45">
    <location>
        <position position="2288"/>
    </location>
</feature>
<feature type="modified residue" description="Phosphothreonine" evidence="37 39 40 44">
    <location>
        <position position="2289"/>
    </location>
</feature>
<feature type="modified residue" description="Phosphothreonine" evidence="32">
    <location>
        <position position="2291"/>
    </location>
</feature>
<feature type="modified residue" description="Phosphothreonine" evidence="37 40">
    <location>
        <position position="2302"/>
    </location>
</feature>
<feature type="modified residue" description="Phosphoserine" evidence="44">
    <location>
        <position position="2310"/>
    </location>
</feature>
<feature type="modified residue" description="Phosphothreonine" evidence="32 37 39 44">
    <location>
        <position position="2316"/>
    </location>
</feature>
<feature type="modified residue" description="Phosphothreonine" evidence="37 40 44">
    <location>
        <position position="2329"/>
    </location>
</feature>
<feature type="modified residue" description="Phosphoserine" evidence="40 44">
    <location>
        <position position="2335"/>
    </location>
</feature>
<feature type="modified residue" description="Omega-N-methylarginine" evidence="45">
    <location>
        <position position="2342"/>
    </location>
</feature>
<feature type="modified residue" description="Phosphoserine" evidence="40">
    <location>
        <position position="2343"/>
    </location>
</feature>
<feature type="modified residue" description="Phosphoserine" evidence="44">
    <location>
        <position position="2368"/>
    </location>
</feature>
<feature type="modified residue" description="Phosphoserine" evidence="44">
    <location>
        <position position="2376"/>
    </location>
</feature>
<feature type="modified residue" description="Phosphothreonine" evidence="39">
    <location>
        <position position="2381"/>
    </location>
</feature>
<feature type="modified residue" description="Phosphoserine" evidence="32 37 39 40 41 46">
    <location>
        <position position="2382"/>
    </location>
</feature>
<feature type="modified residue" description="Asymmetric dimethylarginine; alternate" evidence="45">
    <location>
        <position position="2384"/>
    </location>
</feature>
<feature type="modified residue" description="Omega-N-methylarginine; alternate" evidence="45">
    <location>
        <position position="2384"/>
    </location>
</feature>
<feature type="modified residue" description="Phosphoserine" evidence="40">
    <location>
        <position position="2394"/>
    </location>
</feature>
<feature type="modified residue" description="Phosphoserine" evidence="37 40 41 44">
    <location>
        <position position="2398"/>
    </location>
</feature>
<feature type="modified residue" description="Phosphoserine" evidence="37 40 41 44">
    <location>
        <position position="2407"/>
    </location>
</feature>
<feature type="modified residue" description="Phosphothreonine" evidence="37 40 44">
    <location>
        <position position="2409"/>
    </location>
</feature>
<feature type="modified residue" description="Phosphoserine" evidence="37 41 44">
    <location>
        <position position="2412"/>
    </location>
</feature>
<feature type="modified residue" description="Phosphoserine" evidence="41">
    <location>
        <position position="2415"/>
    </location>
</feature>
<feature type="modified residue" description="Phosphoserine" evidence="40 41 44">
    <location>
        <position position="2426"/>
    </location>
</feature>
<feature type="modified residue" description="Phosphoserine" evidence="41">
    <location>
        <position position="2429"/>
    </location>
</feature>
<feature type="modified residue" description="Phosphoserine" evidence="34 37 39 40 41 44">
    <location>
        <position position="2449"/>
    </location>
</feature>
<feature type="modified residue" description="Phosphoserine" evidence="40">
    <location>
        <position position="2453"/>
    </location>
</feature>
<feature type="modified residue" description="Phosphoserine" evidence="37 40 41 44 46">
    <location>
        <position position="2581"/>
    </location>
</feature>
<feature type="modified residue" description="Phosphothreonine" evidence="40 46">
    <location>
        <position position="2583"/>
    </location>
</feature>
<feature type="modified residue" description="Phosphothreonine" evidence="44">
    <location>
        <position position="2599"/>
    </location>
</feature>
<feature type="modified residue" description="Phosphoserine" evidence="40 41">
    <location>
        <position position="2664"/>
    </location>
</feature>
<feature type="modified residue" description="Phosphoserine" evidence="37 44">
    <location>
        <position position="2675"/>
    </location>
</feature>
<feature type="modified residue" description="Phosphoserine" evidence="37 44">
    <location>
        <position position="2677"/>
    </location>
</feature>
<feature type="modified residue" description="Phosphoserine" evidence="40 41 44">
    <location>
        <position position="2684"/>
    </location>
</feature>
<feature type="modified residue" description="Phosphoserine" evidence="40 41 44">
    <location>
        <position position="2688"/>
    </location>
</feature>
<feature type="modified residue" description="Phosphoserine" evidence="37 40">
    <location>
        <position position="2690"/>
    </location>
</feature>
<feature type="modified residue" description="Phosphoserine" evidence="37 40 41 44">
    <location>
        <position position="2692"/>
    </location>
</feature>
<feature type="modified residue" description="Phosphoserine" evidence="32 37 40 41 44">
    <location>
        <position position="2694"/>
    </location>
</feature>
<feature type="modified residue" description="Phosphoserine" evidence="40 41 44 46">
    <location>
        <position position="2702"/>
    </location>
</feature>
<feature type="modified residue" description="Phosphoserine" evidence="40 41">
    <location>
        <position position="2706"/>
    </location>
</feature>
<feature type="modified residue" description="Phosphothreonine" evidence="44">
    <location>
        <position position="2738"/>
    </location>
</feature>
<feature type="modified residue" description="Phosphoserine" evidence="44">
    <location>
        <position position="2740"/>
    </location>
</feature>
<feature type="cross-link" description="Glycyl lysine isopeptide (Lys-Gly) (interchain with G-Cter in SUMO2)" evidence="47">
    <location>
        <position position="108"/>
    </location>
</feature>
<feature type="cross-link" description="Glycyl lysine isopeptide (Lys-Gly) (interchain with G-Cter in SUMO2)" evidence="47">
    <location>
        <position position="130"/>
    </location>
</feature>
<feature type="cross-link" description="Glycyl lysine isopeptide (Lys-Gly) (interchain with G-Cter in SUMO2)" evidence="47">
    <location>
        <position position="2587"/>
    </location>
</feature>
<feature type="splice variant" id="VSP_020184" description="In isoform 3." evidence="20">
    <location>
        <begin position="1"/>
        <end position="96"/>
    </location>
</feature>
<feature type="splice variant" id="VSP_020185" description="In isoform 3." evidence="20">
    <original>PSEASPTRDRSPPK</original>
    <variation>SPQLFMFLKGILVF</variation>
    <location>
        <begin position="394"/>
        <end position="407"/>
    </location>
</feature>
<feature type="splice variant" id="VSP_020186" description="In isoform 3." evidence="20">
    <location>
        <begin position="408"/>
        <end position="2752"/>
    </location>
</feature>
<feature type="splice variant" id="VSP_020187" description="In isoform 2." evidence="19">
    <location>
        <begin position="2023"/>
        <end position="2440"/>
    </location>
</feature>
<feature type="sequence variant" id="VAR_088788" description="In MRD72; likely pathogenic." evidence="15">
    <location>
        <begin position="20"/>
        <end position="2752"/>
    </location>
</feature>
<feature type="sequence variant" id="VAR_088789" description="In MRD72; likely pathogenic." evidence="15">
    <location>
        <begin position="628"/>
        <end position="2752"/>
    </location>
</feature>
<feature type="sequence variant" id="VAR_027259" description="In dbSNP:rs2240140." evidence="16">
    <original>P</original>
    <variation>T</variation>
    <location>
        <position position="804"/>
    </location>
</feature>
<feature type="sequence variant" id="VAR_048868" description="In dbSNP:rs12185191.">
    <original>T</original>
    <variation>R</variation>
    <location>
        <position position="856"/>
    </location>
</feature>
<feature type="sequence variant" id="VAR_027260" description="In dbSNP:rs17136053.">
    <original>S</original>
    <variation>C</variation>
    <location>
        <position position="883"/>
    </location>
</feature>
<feature type="sequence variant" id="VAR_088790" description="In MRD72; likely pathogenic." evidence="15">
    <location>
        <begin position="1116"/>
        <end position="2752"/>
    </location>
</feature>
<feature type="sequence variant" id="VAR_088791" description="In MRD72; likely pathogenic." evidence="15">
    <location>
        <begin position="1539"/>
        <end position="2752"/>
    </location>
</feature>
<feature type="sequence variant" id="VAR_088792" description="In MRD72; likely pathogenic." evidence="15">
    <location>
        <begin position="1638"/>
        <end position="2752"/>
    </location>
</feature>
<feature type="sequence variant" id="VAR_088793" description="In MRD72; likely pathogenic." evidence="15">
    <location>
        <begin position="1692"/>
        <end position="2752"/>
    </location>
</feature>
<feature type="sequence variant" id="VAR_088794" description="In MRD72; likely pathogenic." evidence="15">
    <location>
        <begin position="2043"/>
        <end position="2752"/>
    </location>
</feature>
<feature type="sequence variant" id="VAR_088795" description="In MRD72; likely pathogenic." evidence="15">
    <location>
        <begin position="2089"/>
        <end position="2752"/>
    </location>
</feature>
<feature type="sequence conflict" description="In Ref. 8; AAF28898." evidence="21" ref="8">
    <original>A</original>
    <variation>V</variation>
    <location>
        <position position="157"/>
    </location>
</feature>
<feature type="sequence conflict" description="In Ref. 2; AAF21439." evidence="21" ref="2">
    <original>SS</original>
    <variation>NN</variation>
    <location>
        <begin position="178"/>
        <end position="179"/>
    </location>
</feature>
<feature type="sequence conflict" description="In Ref. 6; AAH07752." evidence="21" ref="6">
    <original>D</original>
    <variation>K</variation>
    <location>
        <position position="195"/>
    </location>
</feature>
<feature type="sequence conflict" description="In Ref. 2; AAF21439." evidence="21" ref="2">
    <original>G</original>
    <variation>S</variation>
    <location>
        <position position="314"/>
    </location>
</feature>
<feature type="sequence conflict" description="In Ref. 2; AAF21439." evidence="21" ref="2">
    <original>P</original>
    <variation>A</variation>
    <location>
        <position position="321"/>
    </location>
</feature>
<feature type="sequence conflict" description="In Ref. 1; BAA83716/BAA83718." evidence="21" ref="1">
    <original>S</original>
    <variation>F</variation>
    <location>
        <position position="1474"/>
    </location>
</feature>
<feature type="helix" evidence="50">
    <location>
        <begin position="2"/>
        <end position="4"/>
    </location>
</feature>
<feature type="turn" evidence="48">
    <location>
        <begin position="10"/>
        <end position="12"/>
    </location>
</feature>
<feature type="strand" evidence="50">
    <location>
        <begin position="13"/>
        <end position="15"/>
    </location>
</feature>
<feature type="strand" evidence="49">
    <location>
        <begin position="19"/>
        <end position="21"/>
    </location>
</feature>
<feature type="helix" evidence="51">
    <location>
        <begin position="55"/>
        <end position="71"/>
    </location>
</feature>
<feature type="turn" evidence="51">
    <location>
        <begin position="76"/>
        <end position="79"/>
    </location>
</feature>
<feature type="helix" evidence="51">
    <location>
        <begin position="82"/>
        <end position="99"/>
    </location>
</feature>
<comment type="function">
    <text evidence="6 8 9 10 11 12 13 17 23">Required for pre-mRNA splicing as component of the spliceosome. As a component of the minor spliceosome, involved in the splicing of U12-type introns in pre-mRNAs (Probable).</text>
</comment>
<comment type="subunit">
    <text evidence="5 7 8 9 10 11 12 13 14 17">Component of pre-catalytic, catalytic and post-catalytic spliceosome complexes (PubMed:11991638, PubMed:28076346, PubMed:28502770, PubMed:29301961, PubMed:29360106, PubMed:29361316, PubMed:30705154). Found in a pre-mRNA splicing complex with SFRS4, SFRS5, SNRP70, SNRPA1, SRRM1 and SRRM2 (PubMed:9531537). Component of the minor spliceosome, which splices U12-type introns (PubMed:33509932). Interacts with DHX8 (PubMed:28062851). Interacts with CACTIN (PubMed:28062851).</text>
</comment>
<comment type="interaction">
    <interactant intactId="EBI-1050142">
        <id>Q9UQ35</id>
    </interactant>
    <interactant intactId="EBI-1046789">
        <id>O60285</id>
        <label>NUAK1</label>
    </interactant>
    <organismsDiffer>false</organismsDiffer>
    <experiments>2</experiments>
</comment>
<comment type="interaction">
    <interactant intactId="EBI-1050142">
        <id>Q9UQ35</id>
    </interactant>
    <interactant intactId="EBI-749336">
        <id>Q8TAD8</id>
        <label>SNIP1</label>
    </interactant>
    <organismsDiffer>false</organismsDiffer>
    <experiments>3</experiments>
</comment>
<comment type="subcellular location">
    <subcellularLocation>
        <location evidence="7 8 9 10 11 12 13">Nucleus</location>
    </subcellularLocation>
    <subcellularLocation>
        <location evidence="17">Nucleus speckle</location>
    </subcellularLocation>
</comment>
<comment type="alternative products">
    <event type="alternative splicing"/>
    <isoform>
        <id>Q9UQ35-1</id>
        <name>1</name>
        <sequence type="displayed"/>
    </isoform>
    <isoform>
        <id>Q9UQ35-2</id>
        <name>2</name>
        <sequence type="described" ref="VSP_020187"/>
    </isoform>
    <isoform>
        <id>Q9UQ35-3</id>
        <name>3</name>
        <sequence type="described" ref="VSP_020184 VSP_020185 VSP_020186"/>
    </isoform>
</comment>
<comment type="tissue specificity">
    <text evidence="4">Expressed in liver, placenta, and white blood cells.</text>
</comment>
<comment type="disease" evidence="15">
    <disease id="DI-06715">
        <name>Intellectual developmental disorder, autosomal dominant 72</name>
        <acronym>MRD72</acronym>
        <description>An autosomal dominant disorder characterized by mild developmental delay and intellectual disability, predominant speech delay, autistic or attention deficit-hyperactivity disorder features, overfriendliness, generalized hypotonia, overweight, and dysmorphic facial features.</description>
        <dbReference type="MIM" id="620439"/>
    </disease>
    <text>The disease is caused by variants affecting the gene represented in this entry.</text>
</comment>
<comment type="miscellaneous">
    <text evidence="22">Can functionally substitute for CWC12 in yeast.</text>
</comment>
<comment type="similarity">
    <text evidence="21">Belongs to the CWC21 family.</text>
</comment>
<comment type="sequence caution" evidence="21">
    <conflict type="frameshift">
        <sequence resource="EMBL-CDS" id="AAF21439"/>
    </conflict>
</comment>
<comment type="sequence caution" evidence="21">
    <conflict type="frameshift">
        <sequence resource="EMBL-CDS" id="AAF28898"/>
    </conflict>
</comment>
<comment type="sequence caution" evidence="21">
    <conflict type="miscellaneous discrepancy">
        <sequence resource="EMBL-CDS" id="AAH70050"/>
    </conflict>
    <text>Contaminating sequence. Potential poly-A sequence.</text>
</comment>
<comment type="sequence caution" evidence="21">
    <conflict type="erroneous initiation">
        <sequence resource="EMBL-CDS" id="BAA20782"/>
    </conflict>
    <text>Extended N-terminus.</text>
</comment>
<dbReference type="EMBL" id="AB015644">
    <property type="protein sequence ID" value="BAA34957.1"/>
    <property type="molecule type" value="mRNA"/>
</dbReference>
<dbReference type="EMBL" id="AB016087">
    <property type="protein sequence ID" value="BAA83713.1"/>
    <property type="molecule type" value="mRNA"/>
</dbReference>
<dbReference type="EMBL" id="AB016089">
    <property type="protein sequence ID" value="BAA83715.1"/>
    <property type="molecule type" value="mRNA"/>
</dbReference>
<dbReference type="EMBL" id="AB016090">
    <property type="protein sequence ID" value="BAA83716.1"/>
    <property type="molecule type" value="mRNA"/>
</dbReference>
<dbReference type="EMBL" id="AB016091">
    <property type="protein sequence ID" value="BAA83717.1"/>
    <property type="molecule type" value="mRNA"/>
</dbReference>
<dbReference type="EMBL" id="AB016092">
    <property type="protein sequence ID" value="BAA83718.1"/>
    <property type="molecule type" value="mRNA"/>
</dbReference>
<dbReference type="EMBL" id="AF201422">
    <property type="protein sequence ID" value="AAF21439.1"/>
    <property type="status" value="ALT_FRAME"/>
    <property type="molecule type" value="mRNA"/>
</dbReference>
<dbReference type="EMBL" id="AB002322">
    <property type="protein sequence ID" value="BAA20782.3"/>
    <property type="status" value="ALT_INIT"/>
    <property type="molecule type" value="mRNA"/>
</dbReference>
<dbReference type="EMBL" id="AC092117">
    <property type="status" value="NOT_ANNOTATED_CDS"/>
    <property type="molecule type" value="Genomic_DNA"/>
</dbReference>
<dbReference type="EMBL" id="CH471112">
    <property type="protein sequence ID" value="EAW85478.1"/>
    <property type="molecule type" value="Genomic_DNA"/>
</dbReference>
<dbReference type="EMBL" id="CH471112">
    <property type="protein sequence ID" value="EAW85477.1"/>
    <property type="molecule type" value="Genomic_DNA"/>
</dbReference>
<dbReference type="EMBL" id="CH471112">
    <property type="protein sequence ID" value="EAW85480.1"/>
    <property type="molecule type" value="Genomic_DNA"/>
</dbReference>
<dbReference type="EMBL" id="BC007752">
    <property type="protein sequence ID" value="AAH07752.1"/>
    <property type="molecule type" value="mRNA"/>
</dbReference>
<dbReference type="EMBL" id="BC009062">
    <property type="protein sequence ID" value="AAH09062.1"/>
    <property type="molecule type" value="mRNA"/>
</dbReference>
<dbReference type="EMBL" id="BC041155">
    <property type="protein sequence ID" value="AAH41155.1"/>
    <property type="molecule type" value="mRNA"/>
</dbReference>
<dbReference type="EMBL" id="BC070050">
    <property type="protein sequence ID" value="AAH70050.1"/>
    <property type="status" value="ALT_SEQ"/>
    <property type="molecule type" value="mRNA"/>
</dbReference>
<dbReference type="EMBL" id="AF161338">
    <property type="protein sequence ID" value="AAF28898.1"/>
    <property type="status" value="ALT_FRAME"/>
    <property type="molecule type" value="mRNA"/>
</dbReference>
<dbReference type="CCDS" id="CCDS32373.1">
    <molecule id="Q9UQ35-1"/>
</dbReference>
<dbReference type="RefSeq" id="NP_057417.3">
    <molecule id="Q9UQ35-1"/>
    <property type="nucleotide sequence ID" value="NM_016333.3"/>
</dbReference>
<dbReference type="PDB" id="5MQF">
    <property type="method" value="EM"/>
    <property type="resolution" value="5.90 A"/>
    <property type="chains" value="S=1-2752"/>
</dbReference>
<dbReference type="PDB" id="5XJC">
    <property type="method" value="EM"/>
    <property type="resolution" value="3.60 A"/>
    <property type="chains" value="U=1-2752"/>
</dbReference>
<dbReference type="PDB" id="5YZG">
    <property type="method" value="EM"/>
    <property type="resolution" value="4.10 A"/>
    <property type="chains" value="U=1-2752"/>
</dbReference>
<dbReference type="PDB" id="5Z56">
    <property type="method" value="EM"/>
    <property type="resolution" value="5.10 A"/>
    <property type="chains" value="U=1-2752"/>
</dbReference>
<dbReference type="PDB" id="5Z57">
    <property type="method" value="EM"/>
    <property type="resolution" value="6.50 A"/>
    <property type="chains" value="U=1-2752"/>
</dbReference>
<dbReference type="PDB" id="6FF4">
    <property type="method" value="EM"/>
    <property type="resolution" value="16.00 A"/>
    <property type="chains" value="S=1-2752"/>
</dbReference>
<dbReference type="PDB" id="6FF7">
    <property type="method" value="EM"/>
    <property type="resolution" value="4.50 A"/>
    <property type="chains" value="S=1-2752"/>
</dbReference>
<dbReference type="PDB" id="6ICZ">
    <property type="method" value="EM"/>
    <property type="resolution" value="3.00 A"/>
    <property type="chains" value="U=1-2752"/>
</dbReference>
<dbReference type="PDB" id="6QDV">
    <property type="method" value="EM"/>
    <property type="resolution" value="3.30 A"/>
    <property type="chains" value="R=1-26"/>
</dbReference>
<dbReference type="PDB" id="6ZYM">
    <property type="method" value="EM"/>
    <property type="resolution" value="3.40 A"/>
    <property type="chains" value="S=1-2752"/>
</dbReference>
<dbReference type="PDB" id="7A5P">
    <property type="method" value="EM"/>
    <property type="resolution" value="5.00 A"/>
    <property type="chains" value="S=1-2752"/>
</dbReference>
<dbReference type="PDB" id="7DVQ">
    <property type="method" value="EM"/>
    <property type="resolution" value="2.89 A"/>
    <property type="chains" value="U=1-2752"/>
</dbReference>
<dbReference type="PDB" id="7QTT">
    <property type="method" value="EM"/>
    <property type="resolution" value="3.10 A"/>
    <property type="chains" value="q=1-2752"/>
</dbReference>
<dbReference type="PDB" id="7W59">
    <property type="method" value="EM"/>
    <property type="resolution" value="3.60 A"/>
    <property type="chains" value="U=1-2752"/>
</dbReference>
<dbReference type="PDB" id="7W5A">
    <property type="method" value="EM"/>
    <property type="resolution" value="3.60 A"/>
    <property type="chains" value="U=1-2752"/>
</dbReference>
<dbReference type="PDB" id="7W5B">
    <property type="method" value="EM"/>
    <property type="resolution" value="4.30 A"/>
    <property type="chains" value="U=1-2752"/>
</dbReference>
<dbReference type="PDB" id="8C6J">
    <property type="method" value="EM"/>
    <property type="resolution" value="2.80 A"/>
    <property type="chains" value="R=1-2752"/>
</dbReference>
<dbReference type="PDB" id="8CH6">
    <property type="method" value="EM"/>
    <property type="resolution" value="5.90 A"/>
    <property type="chains" value="q=1-2752"/>
</dbReference>
<dbReference type="PDB" id="8I0R">
    <property type="method" value="EM"/>
    <property type="resolution" value="3.00 A"/>
    <property type="chains" value="U=1-2752"/>
</dbReference>
<dbReference type="PDB" id="8I0S">
    <property type="method" value="EM"/>
    <property type="resolution" value="4.20 A"/>
    <property type="chains" value="U=1-2752"/>
</dbReference>
<dbReference type="PDB" id="8I0T">
    <property type="method" value="EM"/>
    <property type="resolution" value="3.00 A"/>
    <property type="chains" value="U=1-2752"/>
</dbReference>
<dbReference type="PDB" id="8I0U">
    <property type="method" value="EM"/>
    <property type="resolution" value="3.30 A"/>
    <property type="chains" value="U=1-2752"/>
</dbReference>
<dbReference type="PDB" id="8I0V">
    <property type="method" value="EM"/>
    <property type="resolution" value="3.00 A"/>
    <property type="chains" value="U=1-2752"/>
</dbReference>
<dbReference type="PDB" id="8I0W">
    <property type="method" value="EM"/>
    <property type="resolution" value="3.40 A"/>
    <property type="chains" value="U=1-2752"/>
</dbReference>
<dbReference type="PDB" id="9FMD">
    <property type="method" value="EM"/>
    <property type="resolution" value="3.30 A"/>
    <property type="chains" value="SR=1-2752"/>
</dbReference>
<dbReference type="PDBsum" id="5MQF"/>
<dbReference type="PDBsum" id="5XJC"/>
<dbReference type="PDBsum" id="5YZG"/>
<dbReference type="PDBsum" id="5Z56"/>
<dbReference type="PDBsum" id="5Z57"/>
<dbReference type="PDBsum" id="6FF4"/>
<dbReference type="PDBsum" id="6FF7"/>
<dbReference type="PDBsum" id="6ICZ"/>
<dbReference type="PDBsum" id="6QDV"/>
<dbReference type="PDBsum" id="6ZYM"/>
<dbReference type="PDBsum" id="7A5P"/>
<dbReference type="PDBsum" id="7DVQ"/>
<dbReference type="PDBsum" id="7QTT"/>
<dbReference type="PDBsum" id="7W59"/>
<dbReference type="PDBsum" id="7W5A"/>
<dbReference type="PDBsum" id="7W5B"/>
<dbReference type="PDBsum" id="8C6J"/>
<dbReference type="PDBsum" id="8CH6"/>
<dbReference type="PDBsum" id="8I0R"/>
<dbReference type="PDBsum" id="8I0S"/>
<dbReference type="PDBsum" id="8I0T"/>
<dbReference type="PDBsum" id="8I0U"/>
<dbReference type="PDBsum" id="8I0V"/>
<dbReference type="PDBsum" id="8I0W"/>
<dbReference type="PDBsum" id="9FMD"/>
<dbReference type="EMDB" id="EMD-11569"/>
<dbReference type="EMDB" id="EMD-14146"/>
<dbReference type="EMDB" id="EMD-16452"/>
<dbReference type="EMDB" id="EMD-16658"/>
<dbReference type="EMDB" id="EMD-30875"/>
<dbReference type="EMDB" id="EMD-32317"/>
<dbReference type="EMDB" id="EMD-32319"/>
<dbReference type="EMDB" id="EMD-32321"/>
<dbReference type="EMDB" id="EMD-35107"/>
<dbReference type="EMDB" id="EMD-35108"/>
<dbReference type="EMDB" id="EMD-35109"/>
<dbReference type="EMDB" id="EMD-35110"/>
<dbReference type="EMDB" id="EMD-35111"/>
<dbReference type="EMDB" id="EMD-35113"/>
<dbReference type="EMDB" id="EMD-3545"/>
<dbReference type="EMDB" id="EMD-4255"/>
<dbReference type="EMDB" id="EMD-4525"/>
<dbReference type="EMDB" id="EMD-6721"/>
<dbReference type="EMDB" id="EMD-6864"/>
<dbReference type="EMDB" id="EMD-6889"/>
<dbReference type="EMDB" id="EMD-6890"/>
<dbReference type="EMDB" id="EMD-9645"/>
<dbReference type="SMR" id="Q9UQ35"/>
<dbReference type="BioGRID" id="117071">
    <property type="interactions" value="473"/>
</dbReference>
<dbReference type="CORUM" id="Q9UQ35"/>
<dbReference type="FunCoup" id="Q9UQ35">
    <property type="interactions" value="1586"/>
</dbReference>
<dbReference type="IntAct" id="Q9UQ35">
    <property type="interactions" value="195"/>
</dbReference>
<dbReference type="MINT" id="Q9UQ35"/>
<dbReference type="STRING" id="9606.ENSP00000301740"/>
<dbReference type="GlyConnect" id="2873">
    <property type="glycosylation" value="1 O-GlcNAc glycan (1 site)"/>
</dbReference>
<dbReference type="GlyCosmos" id="Q9UQ35">
    <property type="glycosylation" value="10 sites, 2 glycans"/>
</dbReference>
<dbReference type="GlyGen" id="Q9UQ35">
    <property type="glycosylation" value="49 sites, 2 O-linked glycans (43 sites)"/>
</dbReference>
<dbReference type="iPTMnet" id="Q9UQ35"/>
<dbReference type="MetOSite" id="Q9UQ35"/>
<dbReference type="PhosphoSitePlus" id="Q9UQ35"/>
<dbReference type="SwissPalm" id="Q9UQ35"/>
<dbReference type="BioMuta" id="SRRM2"/>
<dbReference type="DMDM" id="143928063"/>
<dbReference type="CPTAC" id="CPTAC-1008"/>
<dbReference type="jPOST" id="Q9UQ35"/>
<dbReference type="MassIVE" id="Q9UQ35"/>
<dbReference type="PaxDb" id="9606-ENSP00000301740"/>
<dbReference type="PeptideAtlas" id="Q9UQ35"/>
<dbReference type="ProteomicsDB" id="85503">
    <molecule id="Q9UQ35-1"/>
</dbReference>
<dbReference type="ProteomicsDB" id="85504">
    <molecule id="Q9UQ35-2"/>
</dbReference>
<dbReference type="ProteomicsDB" id="85505">
    <molecule id="Q9UQ35-3"/>
</dbReference>
<dbReference type="Pumba" id="Q9UQ35"/>
<dbReference type="TopDownProteomics" id="Q9UQ35-3">
    <molecule id="Q9UQ35-3"/>
</dbReference>
<dbReference type="Antibodypedia" id="52249">
    <property type="antibodies" value="85 antibodies from 18 providers"/>
</dbReference>
<dbReference type="DNASU" id="23524"/>
<dbReference type="Ensembl" id="ENST00000301740.13">
    <molecule id="Q9UQ35-1"/>
    <property type="protein sequence ID" value="ENSP00000301740.8"/>
    <property type="gene ID" value="ENSG00000167978.19"/>
</dbReference>
<dbReference type="Ensembl" id="ENST00000576924.6">
    <molecule id="Q9UQ35-1"/>
    <property type="protein sequence ID" value="ENSP00000461181.2"/>
    <property type="gene ID" value="ENSG00000167978.19"/>
</dbReference>
<dbReference type="GeneID" id="23524"/>
<dbReference type="KEGG" id="hsa:23524"/>
<dbReference type="MANE-Select" id="ENST00000301740.13">
    <property type="protein sequence ID" value="ENSP00000301740.8"/>
    <property type="RefSeq nucleotide sequence ID" value="NM_016333.4"/>
    <property type="RefSeq protein sequence ID" value="NP_057417.3"/>
</dbReference>
<dbReference type="UCSC" id="uc002crk.3">
    <molecule id="Q9UQ35-1"/>
    <property type="organism name" value="human"/>
</dbReference>
<dbReference type="AGR" id="HGNC:16639"/>
<dbReference type="CTD" id="23524"/>
<dbReference type="DisGeNET" id="23524"/>
<dbReference type="GeneCards" id="SRRM2"/>
<dbReference type="HGNC" id="HGNC:16639">
    <property type="gene designation" value="SRRM2"/>
</dbReference>
<dbReference type="HPA" id="ENSG00000167978">
    <property type="expression patterns" value="Low tissue specificity"/>
</dbReference>
<dbReference type="MalaCards" id="SRRM2"/>
<dbReference type="MIM" id="606032">
    <property type="type" value="gene"/>
</dbReference>
<dbReference type="MIM" id="620439">
    <property type="type" value="phenotype"/>
</dbReference>
<dbReference type="neXtProt" id="NX_Q9UQ35"/>
<dbReference type="OpenTargets" id="ENSG00000167978"/>
<dbReference type="Orphanet" id="652487">
    <property type="disease" value="Developmental delay-overweight-facial dysmorphism-behavioral abnormalities syndrome"/>
</dbReference>
<dbReference type="PharmGKB" id="PA38178"/>
<dbReference type="VEuPathDB" id="HostDB:ENSG00000167978"/>
<dbReference type="eggNOG" id="KOG1869">
    <property type="taxonomic scope" value="Eukaryota"/>
</dbReference>
<dbReference type="GeneTree" id="ENSGT00940000161127"/>
<dbReference type="HOGENOM" id="CLU_000647_0_0_1"/>
<dbReference type="InParanoid" id="Q9UQ35"/>
<dbReference type="OMA" id="QQCIIHY"/>
<dbReference type="OrthoDB" id="10267305at2759"/>
<dbReference type="PAN-GO" id="Q9UQ35">
    <property type="GO annotations" value="1 GO annotation based on evolutionary models"/>
</dbReference>
<dbReference type="TreeFam" id="TF335721"/>
<dbReference type="PathwayCommons" id="Q9UQ35"/>
<dbReference type="Reactome" id="R-HSA-72163">
    <property type="pathway name" value="mRNA Splicing - Major Pathway"/>
</dbReference>
<dbReference type="SignaLink" id="Q9UQ35"/>
<dbReference type="BioGRID-ORCS" id="23524">
    <property type="hits" value="344 hits in 1160 CRISPR screens"/>
</dbReference>
<dbReference type="CD-CODE" id="232F8A39">
    <property type="entry name" value="P-body"/>
</dbReference>
<dbReference type="CD-CODE" id="804901D1">
    <property type="entry name" value="Nuclear speckle"/>
</dbReference>
<dbReference type="ChiTaRS" id="SRRM2">
    <property type="organism name" value="human"/>
</dbReference>
<dbReference type="GeneWiki" id="SRRM2"/>
<dbReference type="GenomeRNAi" id="23524"/>
<dbReference type="Pharos" id="Q9UQ35">
    <property type="development level" value="Tbio"/>
</dbReference>
<dbReference type="PRO" id="PR:Q9UQ35"/>
<dbReference type="Proteomes" id="UP000005640">
    <property type="component" value="Chromosome 16"/>
</dbReference>
<dbReference type="RNAct" id="Q9UQ35">
    <property type="molecule type" value="protein"/>
</dbReference>
<dbReference type="Bgee" id="ENSG00000167978">
    <property type="expression patterns" value="Expressed in right uterine tube and 209 other cell types or tissues"/>
</dbReference>
<dbReference type="ExpressionAtlas" id="Q9UQ35">
    <property type="expression patterns" value="baseline and differential"/>
</dbReference>
<dbReference type="GO" id="GO:0015030">
    <property type="term" value="C:Cajal body"/>
    <property type="evidence" value="ECO:0000314"/>
    <property type="project" value="UniProtKB"/>
</dbReference>
<dbReference type="GO" id="GO:0071013">
    <property type="term" value="C:catalytic step 2 spliceosome"/>
    <property type="evidence" value="ECO:0000314"/>
    <property type="project" value="UniProtKB"/>
</dbReference>
<dbReference type="GO" id="GO:0016607">
    <property type="term" value="C:nuclear speck"/>
    <property type="evidence" value="ECO:0000314"/>
    <property type="project" value="HPA"/>
</dbReference>
<dbReference type="GO" id="GO:0005654">
    <property type="term" value="C:nucleoplasm"/>
    <property type="evidence" value="ECO:0000304"/>
    <property type="project" value="Reactome"/>
</dbReference>
<dbReference type="GO" id="GO:0005634">
    <property type="term" value="C:nucleus"/>
    <property type="evidence" value="ECO:0000314"/>
    <property type="project" value="UniProtKB"/>
</dbReference>
<dbReference type="GO" id="GO:0071007">
    <property type="term" value="C:U2-type catalytic step 2 spliceosome"/>
    <property type="evidence" value="ECO:0000314"/>
    <property type="project" value="UniProtKB"/>
</dbReference>
<dbReference type="GO" id="GO:0071005">
    <property type="term" value="C:U2-type precatalytic spliceosome"/>
    <property type="evidence" value="ECO:0000314"/>
    <property type="project" value="UniProtKB"/>
</dbReference>
<dbReference type="GO" id="GO:0070742">
    <property type="term" value="F:C2H2 zinc finger domain binding"/>
    <property type="evidence" value="ECO:0000314"/>
    <property type="project" value="UniProtKB"/>
</dbReference>
<dbReference type="GO" id="GO:0003729">
    <property type="term" value="F:mRNA binding"/>
    <property type="evidence" value="ECO:0000318"/>
    <property type="project" value="GO_Central"/>
</dbReference>
<dbReference type="GO" id="GO:0003723">
    <property type="term" value="F:RNA binding"/>
    <property type="evidence" value="ECO:0007005"/>
    <property type="project" value="UniProtKB"/>
</dbReference>
<dbReference type="GO" id="GO:0000398">
    <property type="term" value="P:mRNA splicing, via spliceosome"/>
    <property type="evidence" value="ECO:0000314"/>
    <property type="project" value="UniProtKB"/>
</dbReference>
<dbReference type="CDD" id="cd21375">
    <property type="entry name" value="cwf21_SRRM2"/>
    <property type="match status" value="1"/>
</dbReference>
<dbReference type="InterPro" id="IPR051372">
    <property type="entry name" value="CWC21"/>
</dbReference>
<dbReference type="InterPro" id="IPR013170">
    <property type="entry name" value="mRNA_splic_Cwf21_dom"/>
</dbReference>
<dbReference type="InterPro" id="IPR024945">
    <property type="entry name" value="Spt5_C_dom"/>
</dbReference>
<dbReference type="InterPro" id="IPR047490">
    <property type="entry name" value="SRRM2_cwf21"/>
</dbReference>
<dbReference type="PANTHER" id="PTHR36562">
    <property type="entry name" value="SERINE/ARGININE REPETITIVE MATRIX 2"/>
    <property type="match status" value="1"/>
</dbReference>
<dbReference type="PANTHER" id="PTHR36562:SF5">
    <property type="entry name" value="SERINE_ARGININE REPETITIVE MATRIX 2"/>
    <property type="match status" value="1"/>
</dbReference>
<dbReference type="Pfam" id="PF08312">
    <property type="entry name" value="cwf21"/>
    <property type="match status" value="1"/>
</dbReference>
<dbReference type="SMART" id="SM01104">
    <property type="entry name" value="CTD"/>
    <property type="match status" value="1"/>
</dbReference>
<proteinExistence type="evidence at protein level"/>
<name>SRRM2_HUMAN</name>